<feature type="chain" id="PRO_0000207706" description="Calpain-3">
    <location>
        <begin position="1"/>
        <end position="821"/>
    </location>
</feature>
<feature type="domain" description="Calpain catalytic" evidence="1">
    <location>
        <begin position="74"/>
        <end position="417"/>
    </location>
</feature>
<feature type="domain" description="EF-hand 1" evidence="2">
    <location>
        <begin position="649"/>
        <end position="683"/>
    </location>
</feature>
<feature type="domain" description="EF-hand 2" evidence="2">
    <location>
        <begin position="692"/>
        <end position="725"/>
    </location>
</feature>
<feature type="domain" description="EF-hand 3" evidence="2">
    <location>
        <begin position="722"/>
        <end position="757"/>
    </location>
</feature>
<feature type="domain" description="EF-hand 4" evidence="2">
    <location>
        <begin position="787"/>
        <end position="821"/>
    </location>
</feature>
<feature type="region of interest" description="Disordered" evidence="3">
    <location>
        <begin position="7"/>
        <end position="37"/>
    </location>
</feature>
<feature type="region of interest" description="Domain III">
    <location>
        <begin position="418"/>
        <end position="586"/>
    </location>
</feature>
<feature type="region of interest" description="Linker">
    <location>
        <begin position="587"/>
        <end position="649"/>
    </location>
</feature>
<feature type="region of interest" description="Disordered" evidence="3">
    <location>
        <begin position="609"/>
        <end position="652"/>
    </location>
</feature>
<feature type="region of interest" description="Domain IV">
    <location>
        <begin position="650"/>
        <end position="821"/>
    </location>
</feature>
<feature type="compositionally biased region" description="Basic and acidic residues" evidence="3">
    <location>
        <begin position="622"/>
        <end position="634"/>
    </location>
</feature>
<feature type="compositionally biased region" description="Low complexity" evidence="3">
    <location>
        <begin position="635"/>
        <end position="645"/>
    </location>
</feature>
<feature type="active site" evidence="1">
    <location>
        <position position="129"/>
    </location>
</feature>
<feature type="active site" evidence="1">
    <location>
        <position position="334"/>
    </location>
</feature>
<feature type="active site" evidence="1">
    <location>
        <position position="358"/>
    </location>
</feature>
<feature type="binding site" evidence="9 29">
    <location>
        <position position="662"/>
    </location>
    <ligand>
        <name>Ca(2+)</name>
        <dbReference type="ChEBI" id="CHEBI:29108"/>
        <label>1</label>
    </ligand>
</feature>
<feature type="binding site" evidence="9 29">
    <location>
        <position position="665"/>
    </location>
    <ligand>
        <name>Ca(2+)</name>
        <dbReference type="ChEBI" id="CHEBI:29108"/>
        <label>1</label>
    </ligand>
</feature>
<feature type="binding site" evidence="9 29">
    <location>
        <position position="667"/>
    </location>
    <ligand>
        <name>Ca(2+)</name>
        <dbReference type="ChEBI" id="CHEBI:29108"/>
        <label>1</label>
    </ligand>
</feature>
<feature type="binding site" evidence="9 29">
    <location>
        <position position="672"/>
    </location>
    <ligand>
        <name>Ca(2+)</name>
        <dbReference type="ChEBI" id="CHEBI:29108"/>
        <label>1</label>
    </ligand>
</feature>
<feature type="binding site" evidence="2 9 29">
    <location>
        <position position="705"/>
    </location>
    <ligand>
        <name>Ca(2+)</name>
        <dbReference type="ChEBI" id="CHEBI:29108"/>
        <label>2</label>
    </ligand>
</feature>
<feature type="binding site" evidence="2 9 29">
    <location>
        <position position="707"/>
    </location>
    <ligand>
        <name>Ca(2+)</name>
        <dbReference type="ChEBI" id="CHEBI:29108"/>
        <label>2</label>
    </ligand>
</feature>
<feature type="binding site" evidence="2 9 29">
    <location>
        <position position="709"/>
    </location>
    <ligand>
        <name>Ca(2+)</name>
        <dbReference type="ChEBI" id="CHEBI:29108"/>
        <label>2</label>
    </ligand>
</feature>
<feature type="binding site" evidence="2 9 29">
    <location>
        <position position="711"/>
    </location>
    <ligand>
        <name>Ca(2+)</name>
        <dbReference type="ChEBI" id="CHEBI:29108"/>
        <label>2</label>
    </ligand>
</feature>
<feature type="binding site" evidence="2 9 29">
    <location>
        <position position="716"/>
    </location>
    <ligand>
        <name>Ca(2+)</name>
        <dbReference type="ChEBI" id="CHEBI:29108"/>
        <label>2</label>
    </ligand>
</feature>
<feature type="binding site" evidence="2 9 29">
    <location>
        <position position="735"/>
    </location>
    <ligand>
        <name>Ca(2+)</name>
        <dbReference type="ChEBI" id="CHEBI:29108"/>
        <label>3</label>
    </ligand>
</feature>
<feature type="binding site" evidence="2 9 29">
    <location>
        <position position="737"/>
    </location>
    <ligand>
        <name>Ca(2+)</name>
        <dbReference type="ChEBI" id="CHEBI:29108"/>
        <label>3</label>
    </ligand>
</feature>
<feature type="binding site" evidence="2 9 29">
    <location>
        <position position="739"/>
    </location>
    <ligand>
        <name>Ca(2+)</name>
        <dbReference type="ChEBI" id="CHEBI:29108"/>
        <label>3</label>
    </ligand>
</feature>
<feature type="binding site" evidence="2 9 29">
    <location>
        <position position="741"/>
    </location>
    <ligand>
        <name>Ca(2+)</name>
        <dbReference type="ChEBI" id="CHEBI:29108"/>
        <label>3</label>
    </ligand>
</feature>
<feature type="binding site" evidence="2">
    <location>
        <position position="746"/>
    </location>
    <ligand>
        <name>Ca(2+)</name>
        <dbReference type="ChEBI" id="CHEBI:29108"/>
        <label>3</label>
    </ligand>
</feature>
<feature type="binding site" evidence="9 29">
    <location>
        <position position="800"/>
    </location>
    <ligand>
        <name>Ca(2+)</name>
        <dbReference type="ChEBI" id="CHEBI:29108"/>
        <label>4</label>
    </ligand>
</feature>
<feature type="binding site" evidence="9 29">
    <location>
        <position position="802"/>
    </location>
    <ligand>
        <name>Ca(2+)</name>
        <dbReference type="ChEBI" id="CHEBI:29108"/>
        <label>4</label>
    </ligand>
</feature>
<feature type="binding site" evidence="9 29">
    <location>
        <position position="804"/>
    </location>
    <ligand>
        <name>Ca(2+)</name>
        <dbReference type="ChEBI" id="CHEBI:29108"/>
        <label>4</label>
    </ligand>
</feature>
<feature type="binding site" evidence="9 29">
    <location>
        <position position="806"/>
    </location>
    <ligand>
        <name>Ca(2+)</name>
        <dbReference type="ChEBI" id="CHEBI:29108"/>
        <label>4</label>
    </ligand>
</feature>
<feature type="splice variant" id="VSP_044255" description="In isoform V." evidence="24">
    <location>
        <begin position="1"/>
        <end position="665"/>
    </location>
</feature>
<feature type="splice variant" id="VSP_007813" description="In isoform IV." evidence="24 26">
    <location>
        <begin position="1"/>
        <end position="512"/>
    </location>
</feature>
<feature type="splice variant" id="VSP_005227" description="In isoform II." evidence="25">
    <location>
        <begin position="268"/>
        <end position="315"/>
    </location>
</feature>
<feature type="splice variant" id="VSP_005228" description="In isoform II." evidence="25">
    <location>
        <begin position="595"/>
        <end position="638"/>
    </location>
</feature>
<feature type="splice variant" id="VSP_005229" description="In isoform III." evidence="25">
    <location>
        <begin position="595"/>
        <end position="600"/>
    </location>
</feature>
<feature type="sequence variant" id="VAR_009548" description="In LGMDR1; dbSNP:rs140660066." evidence="4">
    <original>V</original>
    <variation>I</variation>
    <location>
        <position position="4"/>
    </location>
</feature>
<feature type="sequence variant" id="VAR_022272" description="In dbSNP:rs28364364." evidence="23">
    <original>G</original>
    <variation>E</variation>
    <location>
        <position position="21"/>
    </location>
</feature>
<feature type="sequence variant" id="VAR_009549" description="In LGMDR1; dbSNP:rs762020512." evidence="4">
    <original>P</original>
    <variation>L</variation>
    <location>
        <position position="26"/>
    </location>
</feature>
<feature type="sequence variant" id="VAR_009550" description="In LGMDR1; dbSNP:rs2141102703." evidence="4">
    <original>D</original>
    <variation>N</variation>
    <location>
        <position position="77"/>
    </location>
</feature>
<feature type="sequence variant" id="VAR_009551" description="In LGMDR1; severe; dbSNP:rs121434546." evidence="17">
    <original>S</original>
    <variation>F</variation>
    <location>
        <position position="86"/>
    </location>
</feature>
<feature type="sequence variant" id="VAR_009552" description="In LGMDR1." evidence="4">
    <location>
        <begin position="93"/>
        <end position="100"/>
    </location>
</feature>
<feature type="sequence variant" id="VAR_009553" description="In dbSNP:rs1801505." evidence="4">
    <original>E</original>
    <variation>K</variation>
    <location>
        <position position="107"/>
    </location>
</feature>
<feature type="sequence variant" id="VAR_009554" description="In LGMDR1; dbSNP:rs1566973583." evidence="4">
    <original>R</original>
    <variation>G</variation>
    <location>
        <position position="118"/>
    </location>
</feature>
<feature type="sequence variant" id="VAR_009555" description="In LGMDR1." evidence="4">
    <original>C</original>
    <variation>R</variation>
    <location>
        <position position="137"/>
    </location>
</feature>
<feature type="sequence variant" id="VAR_015389" description="In dbSNP:rs17592." evidence="23">
    <original>A</original>
    <variation>G</variation>
    <location>
        <position position="160"/>
    </location>
</feature>
<feature type="sequence variant" id="VAR_009556" description="In LGMDR1." evidence="4">
    <original>I</original>
    <variation>L</variation>
    <location>
        <position position="162"/>
    </location>
</feature>
<feature type="sequence variant" id="VAR_001363" description="In LGMDR1; dbSNP:rs2141164715." evidence="4">
    <original>L</original>
    <variation>Q</variation>
    <location>
        <position position="182"/>
    </location>
</feature>
<feature type="sequence variant" id="VAR_009557" description="In LGMDR1." evidence="4">
    <original>P</original>
    <variation>L</variation>
    <location>
        <position position="183"/>
    </location>
</feature>
<feature type="sequence variant" id="VAR_009558" description="In dbSNP:rs35889956." evidence="4">
    <original>T</original>
    <variation>M</variation>
    <location>
        <position position="184"/>
    </location>
</feature>
<feature type="sequence variant" id="VAR_009559" description="In LGMDR1; dbSNP:rs758795961." evidence="4">
    <original>L</original>
    <variation>P</variation>
    <location>
        <position position="189"/>
    </location>
</feature>
<feature type="sequence variant" id="VAR_001364" description="In LGMDR1." evidence="19">
    <location>
        <begin position="200"/>
        <end position="204"/>
    </location>
</feature>
<feature type="sequence variant" id="VAR_009560" description="In LGMDR1; dbSNP:rs369784333." evidence="4">
    <original>G</original>
    <variation>S</variation>
    <location>
        <position position="214"/>
    </location>
</feature>
<feature type="sequence variant" id="VAR_009562" description="In LGMDR1 and LGMDD4." evidence="12 14 17">
    <location>
        <begin position="215"/>
        <end position="221"/>
    </location>
</feature>
<feature type="sequence variant" id="VAR_009561" description="In LGMDR1; dbSNP:rs2053478068." evidence="17">
    <original>S</original>
    <variation>P</variation>
    <location>
        <position position="215"/>
    </location>
</feature>
<feature type="sequence variant" id="VAR_009563" description="In LGMDR1; dbSNP:rs773001194." evidence="4">
    <original>E</original>
    <variation>K</variation>
    <location>
        <position position="217"/>
    </location>
</feature>
<feature type="sequence variant" id="VAR_009564" description="In LGMDR1; dbSNP:rs1345121557." evidence="21">
    <original>G</original>
    <variation>R</variation>
    <location>
        <position position="222"/>
    </location>
</feature>
<feature type="sequence variant" id="VAR_009565" description="In LGMDR1." evidence="4">
    <original>E</original>
    <variation>K</variation>
    <location>
        <position position="226"/>
    </location>
</feature>
<feature type="sequence variant" id="VAR_009566" description="In LGMDR1." evidence="4">
    <original>T</original>
    <variation>I</variation>
    <location>
        <position position="232"/>
    </location>
</feature>
<feature type="sequence variant" id="VAR_001365" description="In LGMDR1; dbSNP:rs1555420634." evidence="4">
    <original>G</original>
    <variation>E</variation>
    <location>
        <position position="234"/>
    </location>
</feature>
<feature type="sequence variant" id="VAR_009567" description="In dbSNP:rs1801449." evidence="23">
    <original>A</original>
    <variation>T</variation>
    <location>
        <position position="236"/>
    </location>
</feature>
<feature type="sequence variant" id="VAR_009568" description="In LGMDR1." evidence="4">
    <location>
        <position position="254"/>
    </location>
</feature>
<feature type="sequence variant" id="VAR_076561" description="In LGMDR1." evidence="10 11">
    <location>
        <begin position="266"/>
        <end position="267"/>
    </location>
</feature>
<feature type="sequence variant" id="VAR_009569" description="In LGMDR1; dbSNP:rs121434547." evidence="17">
    <original>P</original>
    <variation>L</variation>
    <location>
        <position position="319"/>
    </location>
</feature>
<feature type="sequence variant" id="VAR_009570" description="In LGMDR1; dbSNP:rs374833797." evidence="17">
    <original>H</original>
    <variation>Q</variation>
    <location>
        <position position="334"/>
    </location>
</feature>
<feature type="sequence variant" id="VAR_009571" description="In LGMDR1." evidence="18">
    <original>Y</original>
    <variation>N</variation>
    <location>
        <position position="336"/>
    </location>
</feature>
<feature type="sequence variant" id="VAR_001366" description="In LGMDR1; dbSNP:rs1555421271." evidence="4">
    <original>V</original>
    <variation>G</variation>
    <location>
        <position position="354"/>
    </location>
</feature>
<feature type="sequence variant" id="VAR_009572" description="In LGMDR1; dbSNP:rs267606703." evidence="22">
    <original>W</original>
    <variation>C</variation>
    <location>
        <position position="360"/>
    </location>
</feature>
<feature type="sequence variant" id="VAR_009573" description="In LGMDR1; dbSNP:rs777483913." evidence="4">
    <original>R</original>
    <variation>C</variation>
    <location>
        <position position="437"/>
    </location>
</feature>
<feature type="sequence variant" id="VAR_009574" description="In LGMDR1; dbSNP:rs777323132." evidence="17">
    <original>R</original>
    <variation>W</variation>
    <location>
        <position position="440"/>
    </location>
</feature>
<feature type="sequence variant" id="VAR_009575" description="In LGMDR1." evidence="4">
    <original>G</original>
    <variation>D</variation>
    <location>
        <position position="441"/>
    </location>
</feature>
<feature type="sequence variant" id="VAR_009576" description="In LGMDR1; dbSNP:rs773827877." evidence="4">
    <original>G</original>
    <variation>R</variation>
    <location>
        <position position="445"/>
    </location>
</feature>
<feature type="sequence variant" id="VAR_009577" description="In LGMDR1; dbSNP:rs776043976." evidence="4">
    <original>R</original>
    <variation>C</variation>
    <location>
        <position position="448"/>
    </location>
</feature>
<feature type="sequence variant" id="VAR_009578" description="In LGMDR1; dbSNP:rs776043976." evidence="4">
    <original>R</original>
    <variation>G</variation>
    <location>
        <position position="448"/>
    </location>
</feature>
<feature type="sequence variant" id="VAR_009579" description="In LGMDR1; dbSNP:rs863224956." evidence="4">
    <original>R</original>
    <variation>H</variation>
    <location>
        <position position="448"/>
    </location>
</feature>
<feature type="sequence variant" id="VAR_009580" description="In LGMDR1; dbSNP:rs201736037." evidence="4">
    <original>S</original>
    <variation>G</variation>
    <location>
        <position position="479"/>
    </location>
</feature>
<feature type="sequence variant" id="VAR_009581" description="In LGMDR1." evidence="21">
    <original>Q</original>
    <variation>E</variation>
    <location>
        <position position="486"/>
    </location>
</feature>
<feature type="sequence variant" id="VAR_009582" description="In LGMDR1; dbSNP:rs147764579." evidence="4">
    <original>R</original>
    <variation>Q</variation>
    <location>
        <position position="489"/>
    </location>
</feature>
<feature type="sequence variant" id="VAR_009583" description="In LGMDR1; dbSNP:rs863224957." evidence="21">
    <original>R</original>
    <variation>W</variation>
    <location>
        <position position="489"/>
    </location>
</feature>
<feature type="sequence variant" id="VAR_009584" description="In LGMDR1; dbSNP:rs121434548." evidence="18">
    <original>R</original>
    <variation>Q</variation>
    <location>
        <position position="490"/>
    </location>
</feature>
<feature type="sequence variant" id="VAR_001367" description="In LGMDR1; dbSNP:rs141656719." evidence="17">
    <original>R</original>
    <variation>W</variation>
    <location>
        <position position="490"/>
    </location>
</feature>
<feature type="sequence variant" id="VAR_009585" description="In LGMDR1; dbSNP:rs557164942." evidence="4">
    <original>R</original>
    <variation>W</variation>
    <location>
        <position position="493"/>
    </location>
</feature>
<feature type="sequence variant" id="VAR_009586" description="In LGMDR1; dbSNP:rs761637940." evidence="17">
    <original>G</original>
    <variation>R</variation>
    <location>
        <position position="496"/>
    </location>
</feature>
<feature type="sequence variant" id="VAR_009587" description="In LGMDR1; dbSNP:rs148044781." evidence="4">
    <original>I</original>
    <variation>T</variation>
    <location>
        <position position="502"/>
    </location>
</feature>
<feature type="sequence variant" id="VAR_009588" description="In LGMDR1; dbSNP:rs398123143." evidence="4">
    <original>R</original>
    <variation>Q</variation>
    <location>
        <position position="541"/>
    </location>
</feature>
<feature type="sequence variant" id="VAR_009589" description="In LGMDR1; dbSNP:rs727503839." evidence="17">
    <original>G</original>
    <variation>W</variation>
    <location>
        <position position="567"/>
    </location>
</feature>
<feature type="sequence variant" id="VAR_001368" description="In LGMDR1; dbSNP:rs121434544." evidence="16">
    <original>R</original>
    <variation>Q</variation>
    <location>
        <position position="572"/>
    </location>
</feature>
<feature type="sequence variant" id="VAR_009590" description="In LGMDR1; dbSNP:rs863224959." evidence="11 17">
    <original>R</original>
    <variation>W</variation>
    <location>
        <position position="572"/>
    </location>
</feature>
<feature type="sequence variant" id="VAR_009591" description="In LGMDR1; dbSNP:rs199806879." evidence="17">
    <original>S</original>
    <variation>L</variation>
    <location>
        <position position="606"/>
    </location>
</feature>
<feature type="sequence variant" id="VAR_047691" description="In dbSNP:rs11557723.">
    <original>E</original>
    <variation>A</variation>
    <location>
        <position position="622"/>
    </location>
</feature>
<feature type="sequence variant" id="VAR_009592" description="In LGMDR1." evidence="4">
    <original>Q</original>
    <variation>P</variation>
    <location>
        <position position="638"/>
    </location>
</feature>
<feature type="sequence variant" id="VAR_009593" description="In LGMDR1." evidence="4">
    <original>R</original>
    <variation>P</variation>
    <location>
        <position position="698"/>
    </location>
</feature>
<feature type="sequence variant" id="VAR_009594" description="In LGMDR1; dbSNP:rs886042557." evidence="11 17 18">
    <original>A</original>
    <variation>V</variation>
    <location>
        <position position="702"/>
    </location>
</feature>
<feature type="sequence variant" id="VAR_009595" description="In LGMDR1." evidence="4">
    <original>D</original>
    <variation>G</variation>
    <location>
        <position position="705"/>
    </location>
</feature>
<feature type="sequence variant" id="VAR_009596" description="In LGMDR1." evidence="4">
    <original>D</original>
    <variation>H</variation>
    <location>
        <position position="705"/>
    </location>
</feature>
<feature type="sequence variant" id="VAR_009597" description="In LGMDR1." evidence="4">
    <original>F</original>
    <variation>S</variation>
    <location>
        <position position="731"/>
    </location>
</feature>
<feature type="sequence variant" id="VAR_001369" description="In LGMDR1; dbSNP:rs750083132." evidence="16 20">
    <original>S</original>
    <variation>G</variation>
    <location>
        <position position="744"/>
    </location>
</feature>
<feature type="sequence variant" id="VAR_009598" description="In LGMDR1; dbSNP:rs587780290." evidence="10 11 17 18 21">
    <original>R</original>
    <variation>Q</variation>
    <location>
        <position position="748"/>
    </location>
</feature>
<feature type="sequence variant" id="VAR_001370" description="In LGMDR1; dbSNP:rs80338802." evidence="4">
    <original>R</original>
    <variation>Q</variation>
    <location>
        <position position="769"/>
    </location>
</feature>
<feature type="sequence variant" id="VAR_009599" description="In LGMDR1; uncertain significance." evidence="4">
    <original>H</original>
    <variation>D</variation>
    <location>
        <position position="774"/>
    </location>
</feature>
<feature type="sequence variant" id="VAR_009600" description="In LGMDR1; uncertain significance; dbSNP:rs149095128." evidence="4">
    <original>A</original>
    <variation>E</variation>
    <location>
        <position position="798"/>
    </location>
</feature>
<feature type="mutagenesis site" description="Loss of activity. No effect on CMYA5-binding. Does not degradate p53/TP53." evidence="6 13">
    <original>C</original>
    <variation>S</variation>
    <location>
        <position position="129"/>
    </location>
</feature>
<feature type="helix" evidence="31">
    <location>
        <begin position="61"/>
        <end position="70"/>
    </location>
</feature>
<feature type="strand" evidence="31">
    <location>
        <begin position="78"/>
        <end position="80"/>
    </location>
</feature>
<feature type="helix" evidence="31">
    <location>
        <begin position="84"/>
        <end position="87"/>
    </location>
</feature>
<feature type="strand" evidence="32">
    <location>
        <begin position="89"/>
        <end position="91"/>
    </location>
</feature>
<feature type="strand" evidence="31">
    <location>
        <begin position="98"/>
        <end position="100"/>
    </location>
</feature>
<feature type="helix" evidence="31">
    <location>
        <begin position="102"/>
        <end position="105"/>
    </location>
</feature>
<feature type="strand" evidence="32">
    <location>
        <begin position="106"/>
        <end position="108"/>
    </location>
</feature>
<feature type="strand" evidence="32">
    <location>
        <begin position="113"/>
        <end position="116"/>
    </location>
</feature>
<feature type="helix" evidence="31">
    <location>
        <begin position="118"/>
        <end position="120"/>
    </location>
</feature>
<feature type="helix" evidence="31">
    <location>
        <begin position="129"/>
        <end position="138"/>
    </location>
</feature>
<feature type="helix" evidence="31">
    <location>
        <begin position="142"/>
        <end position="148"/>
    </location>
</feature>
<feature type="strand" evidence="31">
    <location>
        <begin position="155"/>
        <end position="158"/>
    </location>
</feature>
<feature type="strand" evidence="31">
    <location>
        <begin position="161"/>
        <end position="168"/>
    </location>
</feature>
<feature type="strand" evidence="31">
    <location>
        <begin position="170"/>
        <end position="179"/>
    </location>
</feature>
<feature type="strand" evidence="31">
    <location>
        <begin position="182"/>
        <end position="185"/>
    </location>
</feature>
<feature type="strand" evidence="31">
    <location>
        <begin position="188"/>
        <end position="191"/>
    </location>
</feature>
<feature type="helix" evidence="31">
    <location>
        <begin position="201"/>
        <end position="212"/>
    </location>
</feature>
<feature type="helix" evidence="31">
    <location>
        <begin position="217"/>
        <end position="219"/>
    </location>
</feature>
<feature type="helix" evidence="31">
    <location>
        <begin position="224"/>
        <end position="232"/>
    </location>
</feature>
<feature type="strand" evidence="31">
    <location>
        <begin position="235"/>
        <end position="240"/>
    </location>
</feature>
<feature type="helix" evidence="31">
    <location>
        <begin position="241"/>
        <end position="243"/>
    </location>
</feature>
<feature type="helix" evidence="31">
    <location>
        <begin position="248"/>
        <end position="257"/>
    </location>
</feature>
<feature type="strand" evidence="31">
    <location>
        <begin position="261"/>
        <end position="265"/>
    </location>
</feature>
<feature type="strand" evidence="31">
    <location>
        <begin position="336"/>
        <end position="346"/>
    </location>
</feature>
<feature type="strand" evidence="31">
    <location>
        <begin position="349"/>
        <end position="357"/>
    </location>
</feature>
<feature type="helix" evidence="31">
    <location>
        <begin position="374"/>
        <end position="378"/>
    </location>
</feature>
<feature type="helix" evidence="31">
    <location>
        <begin position="381"/>
        <end position="386"/>
    </location>
</feature>
<feature type="strand" evidence="31">
    <location>
        <begin position="394"/>
        <end position="400"/>
    </location>
</feature>
<feature type="helix" evidence="31">
    <location>
        <begin position="401"/>
        <end position="407"/>
    </location>
</feature>
<feature type="strand" evidence="31">
    <location>
        <begin position="410"/>
        <end position="415"/>
    </location>
</feature>
<feature type="helix" evidence="30">
    <location>
        <begin position="654"/>
        <end position="662"/>
    </location>
</feature>
<feature type="turn" evidence="30">
    <location>
        <begin position="663"/>
        <end position="666"/>
    </location>
</feature>
<feature type="helix" evidence="30">
    <location>
        <begin position="670"/>
        <end position="680"/>
    </location>
</feature>
<feature type="helix" evidence="30">
    <location>
        <begin position="694"/>
        <end position="704"/>
    </location>
</feature>
<feature type="strand" evidence="30">
    <location>
        <begin position="708"/>
        <end position="712"/>
    </location>
</feature>
<feature type="helix" evidence="30">
    <location>
        <begin position="714"/>
        <end position="734"/>
    </location>
</feature>
<feature type="strand" evidence="30">
    <location>
        <begin position="740"/>
        <end position="743"/>
    </location>
</feature>
<feature type="helix" evidence="30">
    <location>
        <begin position="744"/>
        <end position="753"/>
    </location>
</feature>
<feature type="helix" evidence="30">
    <location>
        <begin position="760"/>
        <end position="770"/>
    </location>
</feature>
<feature type="strand" evidence="30">
    <location>
        <begin position="775"/>
        <end position="778"/>
    </location>
</feature>
<feature type="helix" evidence="30">
    <location>
        <begin position="779"/>
        <end position="797"/>
    </location>
</feature>
<feature type="strand" evidence="30">
    <location>
        <begin position="804"/>
        <end position="809"/>
    </location>
</feature>
<feature type="helix" evidence="30">
    <location>
        <begin position="811"/>
        <end position="821"/>
    </location>
</feature>
<sequence length="821" mass="94254">MPTVISASVAPRTAAEPRSPGPVPHPAQSKATEAGGGNPSGIYSAIISRNFPIIGVKEKTFEQLHKKCLEKKVLYVDPEFPPDETSLFYSQKFPIQFVWKRPPEICENPRFIIDGANRTDICQGELGDCWFLAAIACLTLNQHLLFRVIPHDQSFIENYAGIFHFQFWRYGEWVDVVIDDCLPTYNNQLVFTKSNHRNEFWSALLEKAYAKLHGSYEALKGGNTTEAMEDFTGGVAEFFEIRDAPSDMYKIMKKAIERGSLMGCSIDDGTNMTYGTSPSGLNMGELIARMVRNMDNSLLQDSDLDPRGSDERPTRTIIPVQYETRMACGLVRGHAYSVTGLDEVPFKGEKVKLVRLRNPWGQVEWNGSWSDRWKDWSFVDKDEKARLQHQVTEDGEFWMSYEDFIYHFTKLEICNLTADALQSDKLQTWTVSVNEGRWVRGCSAGGCRNFPDTFWTNPQYRLKLLEEDDDPDDSEVICSFLVALMQKNRRKDRKLGASLFTIGFAIYEVPKEMHGNKQHLQKDFFLYNASKARSKTYINMREVSQRFRLPPSEYVIVPSTYEPHQEGEFILRVFSEKRNLSEEVENTISVDRPVKKKKTKPIIFVSDRANSNKELGVDQESEEGKGKTSPDKQKQSPQPQPGSSDQESEEQQQFRNIFKQIAGDDMEICADELKKVLNTVVNKHKDLKTHGFTLESCRSMIALMDTDGSGKLNLQEFHHLWNKIKAWQKIFKHYDTDQSGTINSYEMRNAVNDAGFHLNNQLYDIITMRYADKHMNIDFDSFICCFVRLEGMFRAFHAFDKDGDGIIKLNVLEWLQLTMYA</sequence>
<name>CAN3_HUMAN</name>
<keyword id="KW-0002">3D-structure</keyword>
<keyword id="KW-0025">Alternative splicing</keyword>
<keyword id="KW-0106">Calcium</keyword>
<keyword id="KW-0963">Cytoplasm</keyword>
<keyword id="KW-0225">Disease variant</keyword>
<keyword id="KW-0378">Hydrolase</keyword>
<keyword id="KW-0947">Limb-girdle muscular dystrophy</keyword>
<keyword id="KW-0479">Metal-binding</keyword>
<keyword id="KW-0539">Nucleus</keyword>
<keyword id="KW-0645">Protease</keyword>
<keyword id="KW-1267">Proteomics identification</keyword>
<keyword id="KW-1185">Reference proteome</keyword>
<keyword id="KW-0677">Repeat</keyword>
<keyword id="KW-0788">Thiol protease</keyword>
<protein>
    <recommendedName>
        <fullName evidence="27">Calpain-3</fullName>
        <ecNumber>3.4.22.54</ecNumber>
    </recommendedName>
    <alternativeName>
        <fullName>Calcium-activated neutral proteinase 3</fullName>
        <shortName>CANP 3</shortName>
    </alternativeName>
    <alternativeName>
        <fullName>Calpain L3</fullName>
    </alternativeName>
    <alternativeName>
        <fullName>Calpain p94</fullName>
    </alternativeName>
    <alternativeName>
        <fullName>Muscle-specific calcium-activated neutral protease 3</fullName>
    </alternativeName>
    <alternativeName>
        <fullName>New calpain 1</fullName>
        <shortName>nCL-1</shortName>
    </alternativeName>
</protein>
<comment type="function">
    <text evidence="7 8 13">Calcium-regulated non-lysosomal thiol-protease. Proteolytically cleaves CTBP1 at 'His-409'. Mediates, with UTP25, the proteasome-independent degradation of p53/TP53 (PubMed:23357851, PubMed:27657329).</text>
</comment>
<comment type="catalytic activity">
    <reaction>
        <text>Broad endopeptidase activity.</text>
        <dbReference type="EC" id="3.4.22.54"/>
    </reaction>
</comment>
<comment type="activity regulation">
    <text>Activated by micromolar concentrations of calcium and inhibited by calpastatin.</text>
</comment>
<comment type="subunit">
    <text evidence="5 6 7 8 9 13">Homodimer; via EF-hand domain 4 (PubMed:24846670). Interacts with TTN/titin (PubMed:14583192). Interacts with CMYA5; this interaction, which results in CMYA5 proteolysis, may protect CAPN3 from autolysis (PubMed:20634290). Interacts with SIMC1 (PubMed:23707407). Interacts with UTP25; the interaction is required for CAPN3 translocation to the nucleolus (PubMed:23357851, PubMed:27657329).</text>
</comment>
<comment type="interaction">
    <interactant intactId="EBI-5655000">
        <id>P20807</id>
    </interactant>
    <interactant intactId="EBI-741158">
        <id>Q96HA8</id>
        <label>NTAQ1</label>
    </interactant>
    <organismsDiffer>false</organismsDiffer>
    <experiments>3</experiments>
</comment>
<comment type="interaction">
    <interactant intactId="EBI-5655000">
        <id>P20807</id>
    </interactant>
    <interactant intactId="EBI-9057006">
        <id>Q9UJX0</id>
        <label>OSGIN1</label>
    </interactant>
    <organismsDiffer>false</organismsDiffer>
    <experiments>4</experiments>
</comment>
<comment type="interaction">
    <interactant intactId="EBI-5655000">
        <id>P20807</id>
    </interactant>
    <interactant intactId="EBI-681210">
        <id>Q8WZ42</id>
        <label>TTN</label>
    </interactant>
    <organismsDiffer>false</organismsDiffer>
    <experiments>4</experiments>
</comment>
<comment type="interaction">
    <interactant intactId="EBI-16433991">
        <id>P20807-2</id>
    </interactant>
    <interactant intactId="EBI-717422">
        <id>Q12800</id>
        <label>TFCP2</label>
    </interactant>
    <organismsDiffer>false</organismsDiffer>
    <experiments>3</experiments>
</comment>
<comment type="interaction">
    <interactant intactId="EBI-11532021">
        <id>P20807-4</id>
    </interactant>
    <interactant intactId="EBI-358049">
        <id>Q13895</id>
        <label>BYSL</label>
    </interactant>
    <organismsDiffer>false</organismsDiffer>
    <experiments>3</experiments>
</comment>
<comment type="interaction">
    <interactant intactId="EBI-11532021">
        <id>P20807-4</id>
    </interactant>
    <interactant intactId="EBI-11532021">
        <id>P20807-4</id>
        <label>CAPN3</label>
    </interactant>
    <organismsDiffer>false</organismsDiffer>
    <experiments>3</experiments>
</comment>
<comment type="interaction">
    <interactant intactId="EBI-11532021">
        <id>P20807-4</id>
    </interactant>
    <interactant intactId="EBI-718729">
        <id>P55212</id>
        <label>CASP6</label>
    </interactant>
    <organismsDiffer>false</organismsDiffer>
    <experiments>3</experiments>
</comment>
<comment type="interaction">
    <interactant intactId="EBI-11532021">
        <id>P20807-4</id>
    </interactant>
    <interactant intactId="EBI-10171570">
        <id>Q68D86</id>
        <label>CCDC102B</label>
    </interactant>
    <organismsDiffer>false</organismsDiffer>
    <experiments>3</experiments>
</comment>
<comment type="interaction">
    <interactant intactId="EBI-11532021">
        <id>P20807-4</id>
    </interactant>
    <interactant intactId="EBI-25837549">
        <id>P28329-3</id>
        <label>CHAT</label>
    </interactant>
    <organismsDiffer>false</organismsDiffer>
    <experiments>3</experiments>
</comment>
<comment type="interaction">
    <interactant intactId="EBI-11532021">
        <id>P20807-4</id>
    </interactant>
    <interactant intactId="EBI-2339219">
        <id>Q08426</id>
        <label>EHHADH</label>
    </interactant>
    <organismsDiffer>false</organismsDiffer>
    <experiments>3</experiments>
</comment>
<comment type="interaction">
    <interactant intactId="EBI-11532021">
        <id>P20807-4</id>
    </interactant>
    <interactant intactId="EBI-742102">
        <id>Q8IYI6</id>
        <label>EXOC8</label>
    </interactant>
    <organismsDiffer>false</organismsDiffer>
    <experiments>3</experiments>
</comment>
<comment type="interaction">
    <interactant intactId="EBI-11532021">
        <id>P20807-4</id>
    </interactant>
    <interactant intactId="EBI-348399">
        <id>P22607</id>
        <label>FGFR3</label>
    </interactant>
    <organismsDiffer>false</organismsDiffer>
    <experiments>3</experiments>
</comment>
<comment type="interaction">
    <interactant intactId="EBI-11532021">
        <id>P20807-4</id>
    </interactant>
    <interactant intactId="EBI-351506">
        <id>P06396</id>
        <label>GSN</label>
    </interactant>
    <organismsDiffer>false</organismsDiffer>
    <experiments>3</experiments>
</comment>
<comment type="interaction">
    <interactant intactId="EBI-11532021">
        <id>P20807-4</id>
    </interactant>
    <interactant intactId="EBI-740290">
        <id>Q969Y2</id>
        <label>GTPBP3</label>
    </interactant>
    <organismsDiffer>false</organismsDiffer>
    <experiments>3</experiments>
</comment>
<comment type="interaction">
    <interactant intactId="EBI-11532021">
        <id>P20807-4</id>
    </interactant>
    <interactant intactId="EBI-2556193">
        <id>Q63ZY3</id>
        <label>KANK2</label>
    </interactant>
    <organismsDiffer>false</organismsDiffer>
    <experiments>3</experiments>
</comment>
<comment type="interaction">
    <interactant intactId="EBI-11532021">
        <id>P20807-4</id>
    </interactant>
    <interactant intactId="EBI-21591415">
        <id>P13473-2</id>
        <label>LAMP2</label>
    </interactant>
    <organismsDiffer>false</organismsDiffer>
    <experiments>3</experiments>
</comment>
<comment type="interaction">
    <interactant intactId="EBI-11532021">
        <id>P20807-4</id>
    </interactant>
    <interactant intactId="EBI-2603996">
        <id>Q9BXW4</id>
        <label>MAP1LC3C</label>
    </interactant>
    <organismsDiffer>false</organismsDiffer>
    <experiments>3</experiments>
</comment>
<comment type="interaction">
    <interactant intactId="EBI-11532021">
        <id>P20807-4</id>
    </interactant>
    <interactant intactId="EBI-741158">
        <id>Q96HA8</id>
        <label>NTAQ1</label>
    </interactant>
    <organismsDiffer>false</organismsDiffer>
    <experiments>3</experiments>
</comment>
<comment type="interaction">
    <interactant intactId="EBI-11532021">
        <id>P20807-4</id>
    </interactant>
    <interactant intactId="EBI-5280197">
        <id>O75400-2</id>
        <label>PRPF40A</label>
    </interactant>
    <organismsDiffer>false</organismsDiffer>
    <experiments>3</experiments>
</comment>
<comment type="interaction">
    <interactant intactId="EBI-11532021">
        <id>P20807-4</id>
    </interactant>
    <interactant intactId="EBI-286642">
        <id>P62826</id>
        <label>RAN</label>
    </interactant>
    <organismsDiffer>false</organismsDiffer>
    <experiments>3</experiments>
</comment>
<comment type="interaction">
    <interactant intactId="EBI-11532021">
        <id>P20807-4</id>
    </interactant>
    <interactant intactId="EBI-722392">
        <id>Q7L099</id>
        <label>RUFY3</label>
    </interactant>
    <organismsDiffer>false</organismsDiffer>
    <experiments>3</experiments>
</comment>
<comment type="interaction">
    <interactant intactId="EBI-11532021">
        <id>P20807-4</id>
    </interactant>
    <interactant intactId="EBI-2623095">
        <id>Q9Y371</id>
        <label>SH3GLB1</label>
    </interactant>
    <organismsDiffer>false</organismsDiffer>
    <experiments>3</experiments>
</comment>
<comment type="interaction">
    <interactant intactId="EBI-11532021">
        <id>P20807-4</id>
    </interactant>
    <interactant intactId="EBI-741480">
        <id>Q9UMX0</id>
        <label>UBQLN1</label>
    </interactant>
    <organismsDiffer>false</organismsDiffer>
    <experiments>3</experiments>
</comment>
<comment type="interaction">
    <interactant intactId="EBI-11532021">
        <id>P20807-4</id>
    </interactant>
    <interactant intactId="EBI-11980193">
        <id>Q14119</id>
        <label>VEZF1</label>
    </interactant>
    <organismsDiffer>false</organismsDiffer>
    <experiments>3</experiments>
</comment>
<comment type="interaction">
    <interactant intactId="EBI-11532021">
        <id>P20807-4</id>
    </interactant>
    <interactant intactId="EBI-11741890">
        <id>Q86VK4-3</id>
        <label>ZNF410</label>
    </interactant>
    <organismsDiffer>false</organismsDiffer>
    <experiments>3</experiments>
</comment>
<comment type="subcellular location">
    <subcellularLocation>
        <location>Cytoplasm</location>
    </subcellularLocation>
    <subcellularLocation>
        <location evidence="7 13">Nucleus</location>
        <location evidence="7 13">Nucleolus</location>
    </subcellularLocation>
</comment>
<comment type="alternative products">
    <event type="alternative splicing"/>
    <isoform>
        <id>P20807-1</id>
        <name>I</name>
        <sequence type="displayed"/>
    </isoform>
    <isoform>
        <id>P20807-2</id>
        <name>II</name>
        <sequence type="described" ref="VSP_005227 VSP_005228"/>
    </isoform>
    <isoform>
        <id>P20807-3</id>
        <name>III</name>
        <sequence type="described" ref="VSP_005229"/>
    </isoform>
    <isoform>
        <id>P20807-4</id>
        <name>IV</name>
        <sequence type="described" ref="VSP_007813"/>
    </isoform>
    <isoform>
        <id>P20807-5</id>
        <name>V</name>
        <sequence type="described" ref="VSP_044255"/>
    </isoform>
</comment>
<comment type="tissue specificity">
    <text>Isoform I is skeletal muscle specific.</text>
</comment>
<comment type="disease" evidence="4 10 11 15 16 17 18 19 20 21 22">
    <disease id="DI-00658">
        <name>Muscular dystrophy, limb-girdle, autosomal recessive 1</name>
        <acronym>LGMDR1</acronym>
        <description>An autosomal recessive degenerative myopathy characterized by progressive symmetrical atrophy and weakness of the proximal limb muscles and elevated serum creatine kinase. The symptoms usually begin during the first two decades of life, and the disease gradually worsens, often resulting in loss of walking ability 10 or 20 years after onset.</description>
        <dbReference type="MIM" id="253600"/>
    </disease>
    <text>The disease is caused by variants affecting the gene represented in this entry.</text>
</comment>
<comment type="disease" evidence="12 14">
    <disease id="DI-05338">
        <name>Muscular dystrophy, limb-girdle, autosomal dominant 4</name>
        <acronym>LGMDD4</acronym>
        <description>A form of autosomal dominant limb-girdle muscular dystrophy, a myopathy characterized by proximal and/or distal muscle weakness and atrophy. The age at onset is variable and can range from the first to the sixth decade, although later onset is less common. LGMDD4 is characterized by onset of proximal muscle weakness in young adulthood, gait difficulties, increased serum creatine kinase, myalgia, and back pain. Some patients may have upper limb involvement. Disease severity and expressivity are highly variable.</description>
        <dbReference type="MIM" id="618129"/>
    </disease>
    <text>The disease is caused by variants affecting the gene represented in this entry.</text>
</comment>
<comment type="similarity">
    <text evidence="27">Belongs to the peptidase C2 family.</text>
</comment>
<comment type="online information" name="Leiden Muscular Dystrophy pages">
    <link uri="https://www.dmd.nl/capn3_home.html"/>
    <text>Calpain-3 mutations in LGMD2A</text>
</comment>
<dbReference type="EC" id="3.4.22.54"/>
<dbReference type="EMBL" id="X85030">
    <property type="protein sequence ID" value="CAA59403.1"/>
    <property type="molecule type" value="mRNA"/>
</dbReference>
<dbReference type="EMBL" id="AF209502">
    <property type="protein sequence ID" value="AAL40183.1"/>
    <property type="molecule type" value="Genomic_DNA"/>
</dbReference>
<dbReference type="EMBL" id="AF127764">
    <property type="protein sequence ID" value="AAD28253.1"/>
    <property type="molecule type" value="mRNA"/>
</dbReference>
<dbReference type="EMBL" id="AF127765">
    <property type="protein sequence ID" value="AAD28254.3"/>
    <property type="molecule type" value="mRNA"/>
</dbReference>
<dbReference type="EMBL" id="BT007322">
    <property type="protein sequence ID" value="AAP35986.1"/>
    <property type="molecule type" value="mRNA"/>
</dbReference>
<dbReference type="EMBL" id="AY902237">
    <property type="protein sequence ID" value="AAW69391.1"/>
    <property type="molecule type" value="Genomic_DNA"/>
</dbReference>
<dbReference type="EMBL" id="AC012651">
    <property type="status" value="NOT_ANNOTATED_CDS"/>
    <property type="molecule type" value="Genomic_DNA"/>
</dbReference>
<dbReference type="EMBL" id="BC003169">
    <property type="protein sequence ID" value="AAH03169.1"/>
    <property type="molecule type" value="mRNA"/>
</dbReference>
<dbReference type="EMBL" id="BC003521">
    <property type="protein sequence ID" value="AAH03521.1"/>
    <property type="molecule type" value="mRNA"/>
</dbReference>
<dbReference type="EMBL" id="BC004883">
    <property type="protein sequence ID" value="AAH04883.1"/>
    <property type="molecule type" value="mRNA"/>
</dbReference>
<dbReference type="EMBL" id="BC007810">
    <property type="protein sequence ID" value="AAH07810.3"/>
    <property type="molecule type" value="mRNA"/>
</dbReference>
<dbReference type="EMBL" id="BC067126">
    <property type="protein sequence ID" value="AAH67126.1"/>
    <property type="molecule type" value="mRNA"/>
</dbReference>
<dbReference type="EMBL" id="BC100782">
    <property type="protein sequence ID" value="AAI00783.1"/>
    <property type="molecule type" value="mRNA"/>
</dbReference>
<dbReference type="EMBL" id="BC107791">
    <property type="protein sequence ID" value="AAI07792.1"/>
    <property type="molecule type" value="mRNA"/>
</dbReference>
<dbReference type="EMBL" id="BC128605">
    <property type="protein sequence ID" value="AAI28606.1"/>
    <property type="molecule type" value="mRNA"/>
</dbReference>
<dbReference type="EMBL" id="BC146649">
    <property type="protein sequence ID" value="AAI46650.1"/>
    <property type="molecule type" value="mRNA"/>
</dbReference>
<dbReference type="EMBL" id="BC146672">
    <property type="protein sequence ID" value="AAI46673.1"/>
    <property type="molecule type" value="mRNA"/>
</dbReference>
<dbReference type="CCDS" id="CCDS10085.1">
    <molecule id="P20807-2"/>
</dbReference>
<dbReference type="CCDS" id="CCDS10086.1">
    <molecule id="P20807-5"/>
</dbReference>
<dbReference type="CCDS" id="CCDS32207.1">
    <molecule id="P20807-3"/>
</dbReference>
<dbReference type="CCDS" id="CCDS45245.1">
    <molecule id="P20807-1"/>
</dbReference>
<dbReference type="CCDS" id="CCDS45246.1">
    <molecule id="P20807-4"/>
</dbReference>
<dbReference type="PIR" id="A56218">
    <property type="entry name" value="CIHUH3"/>
</dbReference>
<dbReference type="RefSeq" id="NP_000061.1">
    <molecule id="P20807-1"/>
    <property type="nucleotide sequence ID" value="NM_000070.3"/>
</dbReference>
<dbReference type="RefSeq" id="NP_077320.1">
    <molecule id="P20807-3"/>
    <property type="nucleotide sequence ID" value="NM_024344.2"/>
</dbReference>
<dbReference type="RefSeq" id="NP_775110.1">
    <molecule id="P20807-2"/>
    <property type="nucleotide sequence ID" value="NM_173087.2"/>
</dbReference>
<dbReference type="RefSeq" id="NP_775111.1">
    <molecule id="P20807-4"/>
    <property type="nucleotide sequence ID" value="NM_173088.2"/>
</dbReference>
<dbReference type="RefSeq" id="NP_775112.1">
    <molecule id="P20807-5"/>
    <property type="nucleotide sequence ID" value="NM_173089.2"/>
</dbReference>
<dbReference type="RefSeq" id="NP_775113.1">
    <molecule id="P20807-5"/>
    <property type="nucleotide sequence ID" value="NM_173090.2"/>
</dbReference>
<dbReference type="PDB" id="4OKH">
    <property type="method" value="X-ray"/>
    <property type="resolution" value="2.45 A"/>
    <property type="chains" value="A/B/C=642-821"/>
</dbReference>
<dbReference type="PDB" id="6BDT">
    <property type="method" value="X-ray"/>
    <property type="resolution" value="2.30 A"/>
    <property type="chains" value="A/B/C/D=46-419"/>
</dbReference>
<dbReference type="PDB" id="6BGP">
    <property type="method" value="X-ray"/>
    <property type="resolution" value="2.75 A"/>
    <property type="chains" value="A/B/C/D=46-419"/>
</dbReference>
<dbReference type="PDB" id="6BJD">
    <property type="method" value="X-ray"/>
    <property type="resolution" value="2.80 A"/>
    <property type="chains" value="A/B/C/D=46-419"/>
</dbReference>
<dbReference type="PDB" id="6BKJ">
    <property type="method" value="X-ray"/>
    <property type="resolution" value="3.20 A"/>
    <property type="chains" value="A/B/C/D=46-419"/>
</dbReference>
<dbReference type="PDBsum" id="4OKH"/>
<dbReference type="PDBsum" id="6BDT"/>
<dbReference type="PDBsum" id="6BGP"/>
<dbReference type="PDBsum" id="6BJD"/>
<dbReference type="PDBsum" id="6BKJ"/>
<dbReference type="EMDB" id="EMD-43646"/>
<dbReference type="SMR" id="P20807"/>
<dbReference type="BioGRID" id="107275">
    <property type="interactions" value="49"/>
</dbReference>
<dbReference type="FunCoup" id="P20807">
    <property type="interactions" value="291"/>
</dbReference>
<dbReference type="IntAct" id="P20807">
    <property type="interactions" value="46"/>
</dbReference>
<dbReference type="MINT" id="P20807"/>
<dbReference type="STRING" id="9606.ENSP00000380349"/>
<dbReference type="DrugBank" id="DB06124">
    <property type="generic name" value="L-aminocarnityl-succinyl-leucyl-argininal-diethylacetal"/>
</dbReference>
<dbReference type="MEROPS" id="C02.004"/>
<dbReference type="GlyCosmos" id="P20807">
    <property type="glycosylation" value="1 site, 2 glycans"/>
</dbReference>
<dbReference type="GlyGen" id="P20807">
    <property type="glycosylation" value="1 site, 2 O-linked glycans (1 site)"/>
</dbReference>
<dbReference type="iPTMnet" id="P20807"/>
<dbReference type="PhosphoSitePlus" id="P20807"/>
<dbReference type="BioMuta" id="CAPN3"/>
<dbReference type="jPOST" id="P20807"/>
<dbReference type="MassIVE" id="P20807"/>
<dbReference type="PaxDb" id="9606-ENSP00000380349"/>
<dbReference type="PeptideAtlas" id="P20807"/>
<dbReference type="ProteomicsDB" id="53791">
    <molecule id="P20807-1"/>
</dbReference>
<dbReference type="ProteomicsDB" id="53792">
    <molecule id="P20807-2"/>
</dbReference>
<dbReference type="ProteomicsDB" id="53793">
    <molecule id="P20807-3"/>
</dbReference>
<dbReference type="ProteomicsDB" id="53794">
    <molecule id="P20807-4"/>
</dbReference>
<dbReference type="ProteomicsDB" id="78657"/>
<dbReference type="Antibodypedia" id="10719">
    <property type="antibodies" value="200 antibodies from 29 providers"/>
</dbReference>
<dbReference type="DNASU" id="825"/>
<dbReference type="Ensembl" id="ENST00000337571.9">
    <molecule id="P20807-5"/>
    <property type="protein sequence ID" value="ENSP00000336840.4"/>
    <property type="gene ID" value="ENSG00000092529.26"/>
</dbReference>
<dbReference type="Ensembl" id="ENST00000349748.8">
    <molecule id="P20807-2"/>
    <property type="protein sequence ID" value="ENSP00000183936.4"/>
    <property type="gene ID" value="ENSG00000092529.26"/>
</dbReference>
<dbReference type="Ensembl" id="ENST00000357568.8">
    <molecule id="P20807-3"/>
    <property type="protein sequence ID" value="ENSP00000350181.3"/>
    <property type="gene ID" value="ENSG00000092529.26"/>
</dbReference>
<dbReference type="Ensembl" id="ENST00000397163.8">
    <molecule id="P20807-1"/>
    <property type="protein sequence ID" value="ENSP00000380349.3"/>
    <property type="gene ID" value="ENSG00000092529.26"/>
</dbReference>
<dbReference type="Ensembl" id="ENST00000397200.8">
    <molecule id="P20807-4"/>
    <property type="protein sequence ID" value="ENSP00000380384.4"/>
    <property type="gene ID" value="ENSG00000092529.26"/>
</dbReference>
<dbReference type="Ensembl" id="ENST00000397204.9">
    <molecule id="P20807-5"/>
    <property type="protein sequence ID" value="ENSP00000380387.4"/>
    <property type="gene ID" value="ENSG00000092529.26"/>
</dbReference>
<dbReference type="Ensembl" id="ENST00000569136.6">
    <molecule id="P20807-5"/>
    <property type="protein sequence ID" value="ENSP00000455254.1"/>
    <property type="gene ID" value="ENSG00000092529.26"/>
</dbReference>
<dbReference type="Ensembl" id="ENST00000673692.1">
    <molecule id="P20807-5"/>
    <property type="protein sequence ID" value="ENSP00000501138.1"/>
    <property type="gene ID" value="ENSG00000092529.26"/>
</dbReference>
<dbReference type="Ensembl" id="ENST00000673771.1">
    <molecule id="P20807-5"/>
    <property type="protein sequence ID" value="ENSP00000501023.1"/>
    <property type="gene ID" value="ENSG00000092529.26"/>
</dbReference>
<dbReference type="Ensembl" id="ENST00000673851.1">
    <molecule id="P20807-5"/>
    <property type="protein sequence ID" value="ENSP00000501142.1"/>
    <property type="gene ID" value="ENSG00000092529.26"/>
</dbReference>
<dbReference type="Ensembl" id="ENST00000673886.1">
    <molecule id="P20807-5"/>
    <property type="protein sequence ID" value="ENSP00000501155.1"/>
    <property type="gene ID" value="ENSG00000092529.26"/>
</dbReference>
<dbReference type="Ensembl" id="ENST00000673890.1">
    <molecule id="P20807-5"/>
    <property type="protein sequence ID" value="ENSP00000501293.1"/>
    <property type="gene ID" value="ENSG00000092529.26"/>
</dbReference>
<dbReference type="Ensembl" id="ENST00000673928.1">
    <molecule id="P20807-5"/>
    <property type="protein sequence ID" value="ENSP00000501099.1"/>
    <property type="gene ID" value="ENSG00000092529.26"/>
</dbReference>
<dbReference type="Ensembl" id="ENST00000673936.1">
    <molecule id="P20807-5"/>
    <property type="protein sequence ID" value="ENSP00000501189.1"/>
    <property type="gene ID" value="ENSG00000092529.26"/>
</dbReference>
<dbReference type="Ensembl" id="ENST00000674018.1">
    <molecule id="P20807-5"/>
    <property type="protein sequence ID" value="ENSP00000501271.1"/>
    <property type="gene ID" value="ENSG00000092529.26"/>
</dbReference>
<dbReference type="Ensembl" id="ENST00000674093.1">
    <molecule id="P20807-5"/>
    <property type="protein sequence ID" value="ENSP00000501303.1"/>
    <property type="gene ID" value="ENSG00000092529.26"/>
</dbReference>
<dbReference type="Ensembl" id="ENST00000674119.1">
    <molecule id="P20807-5"/>
    <property type="protein sequence ID" value="ENSP00000501217.1"/>
    <property type="gene ID" value="ENSG00000092529.26"/>
</dbReference>
<dbReference type="Ensembl" id="ENST00000674139.1">
    <molecule id="P20807-5"/>
    <property type="protein sequence ID" value="ENSP00000501054.1"/>
    <property type="gene ID" value="ENSG00000092529.26"/>
</dbReference>
<dbReference type="Ensembl" id="ENST00000674146.1">
    <molecule id="P20807-5"/>
    <property type="protein sequence ID" value="ENSP00000501175.1"/>
    <property type="gene ID" value="ENSG00000092529.26"/>
</dbReference>
<dbReference type="Ensembl" id="ENST00000674149.1">
    <molecule id="P20807-5"/>
    <property type="protein sequence ID" value="ENSP00000501112.1"/>
    <property type="gene ID" value="ENSG00000092529.26"/>
</dbReference>
<dbReference type="GeneID" id="825"/>
<dbReference type="KEGG" id="hsa:825"/>
<dbReference type="MANE-Select" id="ENST00000397163.8">
    <property type="protein sequence ID" value="ENSP00000380349.3"/>
    <property type="RefSeq nucleotide sequence ID" value="NM_000070.3"/>
    <property type="RefSeq protein sequence ID" value="NP_000061.1"/>
</dbReference>
<dbReference type="UCSC" id="uc001zpn.2">
    <molecule id="P20807-1"/>
    <property type="organism name" value="human"/>
</dbReference>
<dbReference type="AGR" id="HGNC:1480"/>
<dbReference type="CTD" id="825"/>
<dbReference type="DisGeNET" id="825"/>
<dbReference type="GeneCards" id="CAPN3"/>
<dbReference type="GeneReviews" id="CAPN3"/>
<dbReference type="HGNC" id="HGNC:1480">
    <property type="gene designation" value="CAPN3"/>
</dbReference>
<dbReference type="HPA" id="ENSG00000092529">
    <property type="expression patterns" value="Tissue enhanced (brain, skeletal muscle, tongue)"/>
</dbReference>
<dbReference type="MalaCards" id="CAPN3"/>
<dbReference type="MIM" id="114240">
    <property type="type" value="gene"/>
</dbReference>
<dbReference type="MIM" id="253600">
    <property type="type" value="phenotype"/>
</dbReference>
<dbReference type="MIM" id="618129">
    <property type="type" value="phenotype"/>
</dbReference>
<dbReference type="neXtProt" id="NX_P20807"/>
<dbReference type="OpenTargets" id="ENSG00000092529"/>
<dbReference type="Orphanet" id="565909">
    <property type="disease" value="Calpain-3-related limb-girdle muscular dystrophy D4"/>
</dbReference>
<dbReference type="Orphanet" id="267">
    <property type="disease" value="Calpain-3-related limb-girdle muscular dystrophy R1"/>
</dbReference>
<dbReference type="PharmGKB" id="PA26061"/>
<dbReference type="VEuPathDB" id="HostDB:ENSG00000092529"/>
<dbReference type="eggNOG" id="KOG0045">
    <property type="taxonomic scope" value="Eukaryota"/>
</dbReference>
<dbReference type="GeneTree" id="ENSGT00940000156092"/>
<dbReference type="HOGENOM" id="CLU_010982_0_1_1"/>
<dbReference type="InParanoid" id="P20807"/>
<dbReference type="OMA" id="QTTHAQN"/>
<dbReference type="OrthoDB" id="424753at2759"/>
<dbReference type="PAN-GO" id="P20807">
    <property type="GO annotations" value="4 GO annotations based on evolutionary models"/>
</dbReference>
<dbReference type="PhylomeDB" id="P20807"/>
<dbReference type="TreeFam" id="TF314748"/>
<dbReference type="BRENDA" id="3.4.22.54">
    <property type="organism ID" value="2681"/>
</dbReference>
<dbReference type="BRENDA" id="3.4.22.56">
    <property type="organism ID" value="2681"/>
</dbReference>
<dbReference type="PathwayCommons" id="P20807"/>
<dbReference type="Reactome" id="R-HSA-1474228">
    <property type="pathway name" value="Degradation of the extracellular matrix"/>
</dbReference>
<dbReference type="SignaLink" id="P20807"/>
<dbReference type="SIGNOR" id="P20807"/>
<dbReference type="BioGRID-ORCS" id="825">
    <property type="hits" value="16 hits in 1151 CRISPR screens"/>
</dbReference>
<dbReference type="ChiTaRS" id="CAPN3">
    <property type="organism name" value="human"/>
</dbReference>
<dbReference type="EvolutionaryTrace" id="P20807"/>
<dbReference type="GeneWiki" id="CAPN3"/>
<dbReference type="GenomeRNAi" id="825"/>
<dbReference type="Pharos" id="P20807">
    <property type="development level" value="Tbio"/>
</dbReference>
<dbReference type="PRO" id="PR:P20807"/>
<dbReference type="Proteomes" id="UP000005640">
    <property type="component" value="Chromosome 15"/>
</dbReference>
<dbReference type="RNAct" id="P20807">
    <property type="molecule type" value="protein"/>
</dbReference>
<dbReference type="Bgee" id="ENSG00000092529">
    <property type="expression patterns" value="Expressed in hindlimb stylopod muscle and 93 other cell types or tissues"/>
</dbReference>
<dbReference type="ExpressionAtlas" id="P20807">
    <property type="expression patterns" value="baseline and differential"/>
</dbReference>
<dbReference type="GO" id="GO:0005737">
    <property type="term" value="C:cytoplasm"/>
    <property type="evidence" value="ECO:0000314"/>
    <property type="project" value="UniProtKB"/>
</dbReference>
<dbReference type="GO" id="GO:0005829">
    <property type="term" value="C:cytosol"/>
    <property type="evidence" value="ECO:0000250"/>
    <property type="project" value="UniProtKB"/>
</dbReference>
<dbReference type="GO" id="GO:0030016">
    <property type="term" value="C:myofibril"/>
    <property type="evidence" value="ECO:0000250"/>
    <property type="project" value="UniProtKB"/>
</dbReference>
<dbReference type="GO" id="GO:0005730">
    <property type="term" value="C:nucleolus"/>
    <property type="evidence" value="ECO:0000314"/>
    <property type="project" value="UniProtKB"/>
</dbReference>
<dbReference type="GO" id="GO:0005634">
    <property type="term" value="C:nucleus"/>
    <property type="evidence" value="ECO:0000314"/>
    <property type="project" value="UniProtKB"/>
</dbReference>
<dbReference type="GO" id="GO:0005886">
    <property type="term" value="C:plasma membrane"/>
    <property type="evidence" value="ECO:0000250"/>
    <property type="project" value="UniProtKB"/>
</dbReference>
<dbReference type="GO" id="GO:0032991">
    <property type="term" value="C:protein-containing complex"/>
    <property type="evidence" value="ECO:0000250"/>
    <property type="project" value="UniProtKB"/>
</dbReference>
<dbReference type="GO" id="GO:0030315">
    <property type="term" value="C:T-tubule"/>
    <property type="evidence" value="ECO:0000250"/>
    <property type="project" value="UniProtKB"/>
</dbReference>
<dbReference type="GO" id="GO:0030018">
    <property type="term" value="C:Z disc"/>
    <property type="evidence" value="ECO:0000250"/>
    <property type="project" value="UniProtKB"/>
</dbReference>
<dbReference type="GO" id="GO:0005509">
    <property type="term" value="F:calcium ion binding"/>
    <property type="evidence" value="ECO:0000250"/>
    <property type="project" value="UniProtKB"/>
</dbReference>
<dbReference type="GO" id="GO:0004198">
    <property type="term" value="F:calcium-dependent cysteine-type endopeptidase activity"/>
    <property type="evidence" value="ECO:0000250"/>
    <property type="project" value="UniProtKB"/>
</dbReference>
<dbReference type="GO" id="GO:0003824">
    <property type="term" value="F:catalytic activity"/>
    <property type="evidence" value="ECO:0000314"/>
    <property type="project" value="UniProtKB"/>
</dbReference>
<dbReference type="GO" id="GO:0008234">
    <property type="term" value="F:cysteine-type peptidase activity"/>
    <property type="evidence" value="ECO:0000304"/>
    <property type="project" value="ProtInc"/>
</dbReference>
<dbReference type="GO" id="GO:0042802">
    <property type="term" value="F:identical protein binding"/>
    <property type="evidence" value="ECO:0000353"/>
    <property type="project" value="IntAct"/>
</dbReference>
<dbReference type="GO" id="GO:0055103">
    <property type="term" value="F:ligase regulator activity"/>
    <property type="evidence" value="ECO:0000314"/>
    <property type="project" value="UniProtKB"/>
</dbReference>
<dbReference type="GO" id="GO:0060090">
    <property type="term" value="F:molecular adaptor activity"/>
    <property type="evidence" value="ECO:0000250"/>
    <property type="project" value="UniProtKB"/>
</dbReference>
<dbReference type="GO" id="GO:0008233">
    <property type="term" value="F:peptidase activity"/>
    <property type="evidence" value="ECO:0000314"/>
    <property type="project" value="UniProtKB"/>
</dbReference>
<dbReference type="GO" id="GO:0031402">
    <property type="term" value="F:sodium ion binding"/>
    <property type="evidence" value="ECO:0000250"/>
    <property type="project" value="UniProtKB"/>
</dbReference>
<dbReference type="GO" id="GO:0008307">
    <property type="term" value="F:structural constituent of muscle"/>
    <property type="evidence" value="ECO:0000250"/>
    <property type="project" value="UniProtKB"/>
</dbReference>
<dbReference type="GO" id="GO:0031432">
    <property type="term" value="F:titin binding"/>
    <property type="evidence" value="ECO:0000353"/>
    <property type="project" value="UniProtKB"/>
</dbReference>
<dbReference type="GO" id="GO:0006915">
    <property type="term" value="P:apoptotic process"/>
    <property type="evidence" value="ECO:0000304"/>
    <property type="project" value="UniProtKB"/>
</dbReference>
<dbReference type="GO" id="GO:1990092">
    <property type="term" value="P:calcium-dependent self proteolysis"/>
    <property type="evidence" value="ECO:0000314"/>
    <property type="project" value="UniProtKB"/>
</dbReference>
<dbReference type="GO" id="GO:0071277">
    <property type="term" value="P:cellular response to calcium ion"/>
    <property type="evidence" value="ECO:0000250"/>
    <property type="project" value="UniProtKB"/>
</dbReference>
<dbReference type="GO" id="GO:0071472">
    <property type="term" value="P:cellular response to salt stress"/>
    <property type="evidence" value="ECO:0000250"/>
    <property type="project" value="UniProtKB"/>
</dbReference>
<dbReference type="GO" id="GO:0070315">
    <property type="term" value="P:G1 to G0 transition involved in cell differentiation"/>
    <property type="evidence" value="ECO:0007669"/>
    <property type="project" value="Ensembl"/>
</dbReference>
<dbReference type="GO" id="GO:0046716">
    <property type="term" value="P:muscle cell cellular homeostasis"/>
    <property type="evidence" value="ECO:0000304"/>
    <property type="project" value="UniProtKB"/>
</dbReference>
<dbReference type="GO" id="GO:0007517">
    <property type="term" value="P:muscle organ development"/>
    <property type="evidence" value="ECO:0000304"/>
    <property type="project" value="UniProtKB"/>
</dbReference>
<dbReference type="GO" id="GO:0061061">
    <property type="term" value="P:muscle structure development"/>
    <property type="evidence" value="ECO:0000250"/>
    <property type="project" value="UniProtKB"/>
</dbReference>
<dbReference type="GO" id="GO:0030239">
    <property type="term" value="P:myofibril assembly"/>
    <property type="evidence" value="ECO:0000250"/>
    <property type="project" value="UniProtKB"/>
</dbReference>
<dbReference type="GO" id="GO:0043066">
    <property type="term" value="P:negative regulation of apoptotic process"/>
    <property type="evidence" value="ECO:0000315"/>
    <property type="project" value="UniProtKB"/>
</dbReference>
<dbReference type="GO" id="GO:0045892">
    <property type="term" value="P:negative regulation of DNA-templated transcription"/>
    <property type="evidence" value="ECO:0000250"/>
    <property type="project" value="UniProtKB"/>
</dbReference>
<dbReference type="GO" id="GO:0033234">
    <property type="term" value="P:negative regulation of protein sumoylation"/>
    <property type="evidence" value="ECO:0000314"/>
    <property type="project" value="UniProtKB"/>
</dbReference>
<dbReference type="GO" id="GO:0045893">
    <property type="term" value="P:positive regulation of DNA-templated transcription"/>
    <property type="evidence" value="ECO:0000315"/>
    <property type="project" value="UniProtKB"/>
</dbReference>
<dbReference type="GO" id="GO:0045862">
    <property type="term" value="P:positive regulation of proteolysis"/>
    <property type="evidence" value="ECO:0000250"/>
    <property type="project" value="UniProtKB"/>
</dbReference>
<dbReference type="GO" id="GO:0051281">
    <property type="term" value="P:positive regulation of release of sequestered calcium ion into cytosol"/>
    <property type="evidence" value="ECO:0000250"/>
    <property type="project" value="UniProtKB"/>
</dbReference>
<dbReference type="GO" id="GO:0014718">
    <property type="term" value="P:positive regulation of satellite cell activation involved in skeletal muscle regeneration"/>
    <property type="evidence" value="ECO:0000250"/>
    <property type="project" value="UniProtKB"/>
</dbReference>
<dbReference type="GO" id="GO:0030163">
    <property type="term" value="P:protein catabolic process"/>
    <property type="evidence" value="ECO:0000314"/>
    <property type="project" value="UniProtKB"/>
</dbReference>
<dbReference type="GO" id="GO:0031648">
    <property type="term" value="P:protein destabilization"/>
    <property type="evidence" value="ECO:0000315"/>
    <property type="project" value="UniProtKB"/>
</dbReference>
<dbReference type="GO" id="GO:0072657">
    <property type="term" value="P:protein localization to membrane"/>
    <property type="evidence" value="ECO:0000250"/>
    <property type="project" value="UniProtKB"/>
</dbReference>
<dbReference type="GO" id="GO:0065003">
    <property type="term" value="P:protein-containing complex assembly"/>
    <property type="evidence" value="ECO:0000250"/>
    <property type="project" value="UniProtKB"/>
</dbReference>
<dbReference type="GO" id="GO:0006508">
    <property type="term" value="P:proteolysis"/>
    <property type="evidence" value="ECO:0000314"/>
    <property type="project" value="UniProtKB"/>
</dbReference>
<dbReference type="GO" id="GO:0043122">
    <property type="term" value="P:regulation of canonical NF-kappaB signal transduction"/>
    <property type="evidence" value="ECO:0000315"/>
    <property type="project" value="UniProtKB"/>
</dbReference>
<dbReference type="GO" id="GO:0045661">
    <property type="term" value="P:regulation of myoblast differentiation"/>
    <property type="evidence" value="ECO:0007669"/>
    <property type="project" value="Ensembl"/>
</dbReference>
<dbReference type="GO" id="GO:0051592">
    <property type="term" value="P:response to calcium ion"/>
    <property type="evidence" value="ECO:0000250"/>
    <property type="project" value="UniProtKB"/>
</dbReference>
<dbReference type="GO" id="GO:0014850">
    <property type="term" value="P:response to muscle activity"/>
    <property type="evidence" value="ECO:0000250"/>
    <property type="project" value="UniProtKB"/>
</dbReference>
<dbReference type="GO" id="GO:0045214">
    <property type="term" value="P:sarcomere organization"/>
    <property type="evidence" value="ECO:0000250"/>
    <property type="project" value="UniProtKB"/>
</dbReference>
<dbReference type="GO" id="GO:0097264">
    <property type="term" value="P:self proteolysis"/>
    <property type="evidence" value="ECO:0000314"/>
    <property type="project" value="UniProtKB"/>
</dbReference>
<dbReference type="CDD" id="cd00214">
    <property type="entry name" value="Calpain_III"/>
    <property type="match status" value="1"/>
</dbReference>
<dbReference type="CDD" id="cd00044">
    <property type="entry name" value="CysPc"/>
    <property type="match status" value="1"/>
</dbReference>
<dbReference type="CDD" id="cd16190">
    <property type="entry name" value="EFh_PEF_CAPN3"/>
    <property type="match status" value="1"/>
</dbReference>
<dbReference type="DisProt" id="DP02838"/>
<dbReference type="FunFam" id="3.90.70.10:FF:000555">
    <property type="entry name" value="Calpain-3"/>
    <property type="match status" value="1"/>
</dbReference>
<dbReference type="FunFam" id="1.10.238.10:FF:000065">
    <property type="entry name" value="calpain-3 isoform X1"/>
    <property type="match status" value="1"/>
</dbReference>
<dbReference type="FunFam" id="2.60.120.380:FF:000002">
    <property type="entry name" value="calpain-3 isoform X1"/>
    <property type="match status" value="1"/>
</dbReference>
<dbReference type="Gene3D" id="2.60.120.380">
    <property type="match status" value="1"/>
</dbReference>
<dbReference type="Gene3D" id="3.90.70.10">
    <property type="entry name" value="Cysteine proteinases"/>
    <property type="match status" value="1"/>
</dbReference>
<dbReference type="Gene3D" id="1.10.238.10">
    <property type="entry name" value="EF-hand"/>
    <property type="match status" value="1"/>
</dbReference>
<dbReference type="InterPro" id="IPR033883">
    <property type="entry name" value="C2_III"/>
</dbReference>
<dbReference type="InterPro" id="IPR022684">
    <property type="entry name" value="Calpain_cysteine_protease"/>
</dbReference>
<dbReference type="InterPro" id="IPR022682">
    <property type="entry name" value="Calpain_domain_III"/>
</dbReference>
<dbReference type="InterPro" id="IPR022683">
    <property type="entry name" value="Calpain_III"/>
</dbReference>
<dbReference type="InterPro" id="IPR036213">
    <property type="entry name" value="Calpain_III_sf"/>
</dbReference>
<dbReference type="InterPro" id="IPR054069">
    <property type="entry name" value="CAPN3/13-like_C_EFh"/>
</dbReference>
<dbReference type="InterPro" id="IPR029531">
    <property type="entry name" value="CAPN3_PEF"/>
</dbReference>
<dbReference type="InterPro" id="IPR011992">
    <property type="entry name" value="EF-hand-dom_pair"/>
</dbReference>
<dbReference type="InterPro" id="IPR018247">
    <property type="entry name" value="EF_Hand_1_Ca_BS"/>
</dbReference>
<dbReference type="InterPro" id="IPR002048">
    <property type="entry name" value="EF_hand_dom"/>
</dbReference>
<dbReference type="InterPro" id="IPR038765">
    <property type="entry name" value="Papain-like_cys_pep_sf"/>
</dbReference>
<dbReference type="InterPro" id="IPR000169">
    <property type="entry name" value="Pept_cys_AS"/>
</dbReference>
<dbReference type="InterPro" id="IPR001300">
    <property type="entry name" value="Peptidase_C2_calpain_cat"/>
</dbReference>
<dbReference type="PANTHER" id="PTHR10183">
    <property type="entry name" value="CALPAIN"/>
    <property type="match status" value="1"/>
</dbReference>
<dbReference type="PANTHER" id="PTHR10183:SF329">
    <property type="entry name" value="CALPAIN-3"/>
    <property type="match status" value="1"/>
</dbReference>
<dbReference type="Pfam" id="PF01067">
    <property type="entry name" value="Calpain_III"/>
    <property type="match status" value="1"/>
</dbReference>
<dbReference type="Pfam" id="PF16648">
    <property type="entry name" value="Calpain_u2"/>
    <property type="match status" value="1"/>
</dbReference>
<dbReference type="Pfam" id="PF21875">
    <property type="entry name" value="CAPN13-like_C_EFh"/>
    <property type="match status" value="1"/>
</dbReference>
<dbReference type="Pfam" id="PF13833">
    <property type="entry name" value="EF-hand_8"/>
    <property type="match status" value="1"/>
</dbReference>
<dbReference type="Pfam" id="PF00648">
    <property type="entry name" value="Peptidase_C2"/>
    <property type="match status" value="1"/>
</dbReference>
<dbReference type="PRINTS" id="PR00704">
    <property type="entry name" value="CALPAIN"/>
</dbReference>
<dbReference type="SMART" id="SM00720">
    <property type="entry name" value="calpain_III"/>
    <property type="match status" value="1"/>
</dbReference>
<dbReference type="SMART" id="SM00230">
    <property type="entry name" value="CysPc"/>
    <property type="match status" value="1"/>
</dbReference>
<dbReference type="SMART" id="SM00054">
    <property type="entry name" value="EFh"/>
    <property type="match status" value="3"/>
</dbReference>
<dbReference type="SUPFAM" id="SSF49758">
    <property type="entry name" value="Calpain large subunit, middle domain (domain III)"/>
    <property type="match status" value="1"/>
</dbReference>
<dbReference type="SUPFAM" id="SSF54001">
    <property type="entry name" value="Cysteine proteinases"/>
    <property type="match status" value="1"/>
</dbReference>
<dbReference type="SUPFAM" id="SSF47473">
    <property type="entry name" value="EF-hand"/>
    <property type="match status" value="1"/>
</dbReference>
<dbReference type="PROSITE" id="PS50203">
    <property type="entry name" value="CALPAIN_CAT"/>
    <property type="match status" value="1"/>
</dbReference>
<dbReference type="PROSITE" id="PS00018">
    <property type="entry name" value="EF_HAND_1"/>
    <property type="match status" value="2"/>
</dbReference>
<dbReference type="PROSITE" id="PS50222">
    <property type="entry name" value="EF_HAND_2"/>
    <property type="match status" value="4"/>
</dbReference>
<dbReference type="PROSITE" id="PS00139">
    <property type="entry name" value="THIOL_PROTEASE_CYS"/>
    <property type="match status" value="1"/>
</dbReference>
<organism>
    <name type="scientific">Homo sapiens</name>
    <name type="common">Human</name>
    <dbReference type="NCBI Taxonomy" id="9606"/>
    <lineage>
        <taxon>Eukaryota</taxon>
        <taxon>Metazoa</taxon>
        <taxon>Chordata</taxon>
        <taxon>Craniata</taxon>
        <taxon>Vertebrata</taxon>
        <taxon>Euteleostomi</taxon>
        <taxon>Mammalia</taxon>
        <taxon>Eutheria</taxon>
        <taxon>Euarchontoglires</taxon>
        <taxon>Primates</taxon>
        <taxon>Haplorrhini</taxon>
        <taxon>Catarrhini</taxon>
        <taxon>Hominidae</taxon>
        <taxon>Homo</taxon>
    </lineage>
</organism>
<gene>
    <name evidence="28" type="primary">CAPN3</name>
    <name type="synonym">CANP3</name>
    <name type="synonym">CANPL3</name>
    <name type="synonym">NCL1</name>
</gene>
<evidence type="ECO:0000255" key="1">
    <source>
        <dbReference type="PROSITE-ProRule" id="PRU00239"/>
    </source>
</evidence>
<evidence type="ECO:0000255" key="2">
    <source>
        <dbReference type="PROSITE-ProRule" id="PRU00448"/>
    </source>
</evidence>
<evidence type="ECO:0000256" key="3">
    <source>
        <dbReference type="SAM" id="MobiDB-lite"/>
    </source>
</evidence>
<evidence type="ECO:0000269" key="4">
    <source>
    </source>
</evidence>
<evidence type="ECO:0000269" key="5">
    <source>
    </source>
</evidence>
<evidence type="ECO:0000269" key="6">
    <source>
    </source>
</evidence>
<evidence type="ECO:0000269" key="7">
    <source>
    </source>
</evidence>
<evidence type="ECO:0000269" key="8">
    <source>
    </source>
</evidence>
<evidence type="ECO:0000269" key="9">
    <source>
    </source>
</evidence>
<evidence type="ECO:0000269" key="10">
    <source>
    </source>
</evidence>
<evidence type="ECO:0000269" key="11">
    <source>
    </source>
</evidence>
<evidence type="ECO:0000269" key="12">
    <source>
    </source>
</evidence>
<evidence type="ECO:0000269" key="13">
    <source>
    </source>
</evidence>
<evidence type="ECO:0000269" key="14">
    <source>
    </source>
</evidence>
<evidence type="ECO:0000269" key="15">
    <source>
    </source>
</evidence>
<evidence type="ECO:0000269" key="16">
    <source>
    </source>
</evidence>
<evidence type="ECO:0000269" key="17">
    <source>
    </source>
</evidence>
<evidence type="ECO:0000269" key="18">
    <source>
    </source>
</evidence>
<evidence type="ECO:0000269" key="19">
    <source>
    </source>
</evidence>
<evidence type="ECO:0000269" key="20">
    <source>
    </source>
</evidence>
<evidence type="ECO:0000269" key="21">
    <source>
    </source>
</evidence>
<evidence type="ECO:0000269" key="22">
    <source>
    </source>
</evidence>
<evidence type="ECO:0000269" key="23">
    <source ref="5"/>
</evidence>
<evidence type="ECO:0000303" key="24">
    <source>
    </source>
</evidence>
<evidence type="ECO:0000303" key="25">
    <source ref="3"/>
</evidence>
<evidence type="ECO:0000303" key="26">
    <source ref="4"/>
</evidence>
<evidence type="ECO:0000305" key="27"/>
<evidence type="ECO:0000312" key="28">
    <source>
        <dbReference type="HGNC" id="HGNC:1480"/>
    </source>
</evidence>
<evidence type="ECO:0007744" key="29">
    <source>
        <dbReference type="PDB" id="4OKH"/>
    </source>
</evidence>
<evidence type="ECO:0007829" key="30">
    <source>
        <dbReference type="PDB" id="4OKH"/>
    </source>
</evidence>
<evidence type="ECO:0007829" key="31">
    <source>
        <dbReference type="PDB" id="6BDT"/>
    </source>
</evidence>
<evidence type="ECO:0007829" key="32">
    <source>
        <dbReference type="PDB" id="6BJD"/>
    </source>
</evidence>
<proteinExistence type="evidence at protein level"/>
<accession>P20807</accession>
<accession>A6H8K6</accession>
<accession>Q7L4R0</accession>
<accession>Q9BQC8</accession>
<accession>Q9BTU4</accession>
<accession>Q9Y5S6</accession>
<accession>Q9Y5S7</accession>
<reference key="1">
    <citation type="journal article" date="1995" name="Cell">
        <title>Mutations in the proteolytic enzyme calpain 3 cause limb-girdle muscular dystrophy type 2A.</title>
        <authorList>
            <person name="Richard I."/>
            <person name="Broux O."/>
            <person name="Allamand V."/>
            <person name="Fougerousse F."/>
            <person name="Chiannilkulchai N."/>
            <person name="Bourg N."/>
            <person name="Brenguier L."/>
            <person name="Devaud C."/>
            <person name="Pasturaud P."/>
            <person name="Roudaut C."/>
            <person name="Hillaire D."/>
            <person name="Passos-Bueno M.-R."/>
            <person name="Zatz M."/>
            <person name="Tischfield J.A."/>
            <person name="Fardeau M."/>
            <person name="Jackson C.E."/>
            <person name="Cohen D."/>
            <person name="Beckmann J.S."/>
        </authorList>
    </citation>
    <scope>NUCLEOTIDE SEQUENCE [MRNA] (ISOFORM I)</scope>
    <scope>VARIANTS LGMDR1</scope>
</reference>
<reference key="2">
    <citation type="submission" date="1999-11" db="EMBL/GenBank/DDBJ databases">
        <title>hCAPN3-hZFP106 genomic sequence.</title>
        <authorList>
            <person name="Mashima H."/>
            <person name="Horikawa Y."/>
            <person name="Cox N.J."/>
            <person name="Bell G.I."/>
        </authorList>
    </citation>
    <scope>NUCLEOTIDE SEQUENCE [GENOMIC DNA] (ISOFORM I)</scope>
</reference>
<reference key="3">
    <citation type="submission" date="2000-05" db="EMBL/GenBank/DDBJ databases">
        <title>Alternatively exon-spliced isoforms of calpain 3 expressed in human leukocytes.</title>
        <authorList>
            <person name="Dickson J.M.J."/>
            <person name="Love D."/>
            <person name="Evans C.W.E."/>
        </authorList>
    </citation>
    <scope>NUCLEOTIDE SEQUENCE [MRNA] (ISOFORMS II AND III)</scope>
</reference>
<reference key="4">
    <citation type="submission" date="2003-05" db="EMBL/GenBank/DDBJ databases">
        <title>Cloning of human full-length CDSs in BD Creator(TM) system donor vector.</title>
        <authorList>
            <person name="Kalnine N."/>
            <person name="Chen X."/>
            <person name="Rolfs A."/>
            <person name="Halleck A."/>
            <person name="Hines L."/>
            <person name="Eisenstein S."/>
            <person name="Koundinya M."/>
            <person name="Raphael J."/>
            <person name="Moreira D."/>
            <person name="Kelley T."/>
            <person name="LaBaer J."/>
            <person name="Lin Y."/>
            <person name="Phelan M."/>
            <person name="Farmer A."/>
        </authorList>
    </citation>
    <scope>NUCLEOTIDE SEQUENCE [LARGE SCALE MRNA] (ISOFORM IV)</scope>
</reference>
<reference key="5">
    <citation type="submission" date="2005-01" db="EMBL/GenBank/DDBJ databases">
        <authorList>
            <consortium name="NIEHS SNPs program"/>
        </authorList>
    </citation>
    <scope>NUCLEOTIDE SEQUENCE [GENOMIC DNA]</scope>
    <scope>VARIANTS GLU-21; GLY-160 AND THR-236</scope>
</reference>
<reference key="6">
    <citation type="journal article" date="2006" name="Nature">
        <title>Analysis of the DNA sequence and duplication history of human chromosome 15.</title>
        <authorList>
            <person name="Zody M.C."/>
            <person name="Garber M."/>
            <person name="Sharpe T."/>
            <person name="Young S.K."/>
            <person name="Rowen L."/>
            <person name="O'Neill K."/>
            <person name="Whittaker C.A."/>
            <person name="Kamal M."/>
            <person name="Chang J.L."/>
            <person name="Cuomo C.A."/>
            <person name="Dewar K."/>
            <person name="FitzGerald M.G."/>
            <person name="Kodira C.D."/>
            <person name="Madan A."/>
            <person name="Qin S."/>
            <person name="Yang X."/>
            <person name="Abbasi N."/>
            <person name="Abouelleil A."/>
            <person name="Arachchi H.M."/>
            <person name="Baradarani L."/>
            <person name="Birditt B."/>
            <person name="Bloom S."/>
            <person name="Bloom T."/>
            <person name="Borowsky M.L."/>
            <person name="Burke J."/>
            <person name="Butler J."/>
            <person name="Cook A."/>
            <person name="DeArellano K."/>
            <person name="DeCaprio D."/>
            <person name="Dorris L. III"/>
            <person name="Dors M."/>
            <person name="Eichler E.E."/>
            <person name="Engels R."/>
            <person name="Fahey J."/>
            <person name="Fleetwood P."/>
            <person name="Friedman C."/>
            <person name="Gearin G."/>
            <person name="Hall J.L."/>
            <person name="Hensley G."/>
            <person name="Johnson E."/>
            <person name="Jones C."/>
            <person name="Kamat A."/>
            <person name="Kaur A."/>
            <person name="Locke D.P."/>
            <person name="Madan A."/>
            <person name="Munson G."/>
            <person name="Jaffe D.B."/>
            <person name="Lui A."/>
            <person name="Macdonald P."/>
            <person name="Mauceli E."/>
            <person name="Naylor J.W."/>
            <person name="Nesbitt R."/>
            <person name="Nicol R."/>
            <person name="O'Leary S.B."/>
            <person name="Ratcliffe A."/>
            <person name="Rounsley S."/>
            <person name="She X."/>
            <person name="Sneddon K.M.B."/>
            <person name="Stewart S."/>
            <person name="Sougnez C."/>
            <person name="Stone S.M."/>
            <person name="Topham K."/>
            <person name="Vincent D."/>
            <person name="Wang S."/>
            <person name="Zimmer A.R."/>
            <person name="Birren B.W."/>
            <person name="Hood L."/>
            <person name="Lander E.S."/>
            <person name="Nusbaum C."/>
        </authorList>
    </citation>
    <scope>NUCLEOTIDE SEQUENCE [LARGE SCALE GENOMIC DNA]</scope>
</reference>
<reference key="7">
    <citation type="journal article" date="2004" name="Genome Res.">
        <title>The status, quality, and expansion of the NIH full-length cDNA project: the Mammalian Gene Collection (MGC).</title>
        <authorList>
            <consortium name="The MGC Project Team"/>
        </authorList>
    </citation>
    <scope>NUCLEOTIDE SEQUENCE [LARGE SCALE MRNA] (ISOFORMS IV AND V)</scope>
    <source>
        <tissue>Skin</tissue>
        <tissue>Uterus</tissue>
    </source>
</reference>
<reference key="8">
    <citation type="journal article" date="1989" name="J. Biol. Chem.">
        <title>Molecular cloning of a novel mammalian calcium-dependent protease distinct from both m- and mu-types. Specific expression of the mRNA in skeletal muscle.</title>
        <authorList>
            <person name="Sorimachi H."/>
            <person name="Imajoh-Ohmi S."/>
            <person name="Emori Y."/>
            <person name="Kawasaki H."/>
            <person name="Ohno S."/>
            <person name="Minami Y."/>
            <person name="Suzuki K."/>
        </authorList>
    </citation>
    <scope>NUCLEOTIDE SEQUENCE [MRNA] OF 44-821 (ISOFORM I)</scope>
</reference>
<reference key="9">
    <citation type="journal article" date="2003" name="J. Mol. Biol.">
        <title>The muscle ankyrin repeat proteins: CARP, ankrd2/Arpp and DARP as a family of titin filament-based stress response molecules.</title>
        <authorList>
            <person name="Miller M.K."/>
            <person name="Bang M.-L."/>
            <person name="Witt C.C."/>
            <person name="Labeit D."/>
            <person name="Trombitas C."/>
            <person name="Watanabe K."/>
            <person name="Granzier H."/>
            <person name="McElhinny A.S."/>
            <person name="Gregorio C.C."/>
            <person name="Labeit S."/>
        </authorList>
    </citation>
    <scope>INTERACTION WITH TTN</scope>
</reference>
<reference key="10">
    <citation type="journal article" date="1999" name="Am. J. Hum. Genet.">
        <title>Calpainopathy -- a survey of mutations and polymorphisms.</title>
        <authorList>
            <person name="Richard I."/>
            <person name="Roudaut C."/>
            <person name="Saenz A."/>
            <person name="Pogue R."/>
            <person name="Grimbergen J.E.M.A."/>
            <person name="Anderson L.V.B."/>
            <person name="Beley C."/>
            <person name="Cobo A.-M."/>
            <person name="de Diego C."/>
            <person name="Eymard B."/>
            <person name="Gallano P."/>
            <person name="Ginjaar H.B."/>
            <person name="Lasa A."/>
            <person name="Pollitt C."/>
            <person name="Topaloglu H."/>
            <person name="Urtizberea J.A."/>
            <person name="de Visser M."/>
            <person name="van der Kooi A."/>
            <person name="Bushby K."/>
            <person name="Bakker E."/>
            <person name="Lopez de Munain A."/>
            <person name="Fardeau M."/>
            <person name="Beckmann J.S."/>
        </authorList>
    </citation>
    <scope>VARIANTS LGMDR1 ILE-232 AND LYS-254 DEL</scope>
</reference>
<reference key="11">
    <citation type="journal article" date="2010" name="J. Biol. Chem.">
        <title>Interactions with M-band titin and calpain 3 link myospryn (CMYA5) to tibial and limb-girdle muscular dystrophies.</title>
        <authorList>
            <person name="Sarparanta J."/>
            <person name="Blandin G."/>
            <person name="Charton K."/>
            <person name="Vihola A."/>
            <person name="Marchand S."/>
            <person name="Milic A."/>
            <person name="Hackman P."/>
            <person name="Ehler E."/>
            <person name="Richard I."/>
            <person name="Udd B."/>
        </authorList>
    </citation>
    <scope>INTERACTION WITH CMYA5</scope>
    <scope>MUTAGENESIS OF CYS-129</scope>
</reference>
<reference key="12">
    <citation type="journal article" date="2013" name="Cell Res.">
        <title>Def defines a conserved nucleolar pathway that leads p53 to proteasome-independent degradation.</title>
        <authorList>
            <person name="Tao T."/>
            <person name="Shi H."/>
            <person name="Guan Y."/>
            <person name="Huang D."/>
            <person name="Chen Y."/>
            <person name="Lane D.P."/>
            <person name="Chen J."/>
            <person name="Peng J."/>
        </authorList>
    </citation>
    <scope>FUNCTION</scope>
    <scope>INTERACTION WITH UTP25</scope>
    <scope>SUBCELLULAR LOCATION</scope>
</reference>
<reference key="13">
    <citation type="journal article" date="2013" name="J. Mol. Biol.">
        <title>PLEIAD/SIMC1/C5orf25, a novel autolysis regulator for a skeletal-muscle-specific calpain, CAPN3, scaffolds a CAPN3 substrate, CTBP1.</title>
        <authorList>
            <person name="Ono Y."/>
            <person name="Iemura S."/>
            <person name="Novak S.M."/>
            <person name="Doi N."/>
            <person name="Kitamura F."/>
            <person name="Natsume T."/>
            <person name="Gregorio C.C."/>
            <person name="Sorimachi H."/>
        </authorList>
    </citation>
    <scope>FUNCTION</scope>
    <scope>INTERACTION WITH SIMC1</scope>
</reference>
<reference key="14">
    <citation type="journal article" date="2016" name="PLoS Biol.">
        <title>Phosphorylation of Def Regulates Nucleolar p53 Turnover and Cell Cycle Progression through Def Recruitment of Calpain3.</title>
        <authorList>
            <person name="Guan Y."/>
            <person name="Huang D."/>
            <person name="Chen F."/>
            <person name="Gao C."/>
            <person name="Tao T."/>
            <person name="Shi H."/>
            <person name="Zhao S."/>
            <person name="Liao Z."/>
            <person name="Lo L.J."/>
            <person name="Wang Y."/>
            <person name="Chen J."/>
            <person name="Peng J."/>
        </authorList>
    </citation>
    <scope>FUNCTION</scope>
    <scope>INTERACTION WITH CAPN3</scope>
    <scope>SUBCELLULAR LOCATION</scope>
    <scope>MUTAGENESIS OF CYS-129</scope>
</reference>
<reference key="15">
    <citation type="journal article" date="2014" name="FEBS J.">
        <title>Crystal structure of calpain-3 penta-EF-hand (PEF) domain - a homodimerized PEF family member with calcium bound at the fifth EF-hand.</title>
        <authorList>
            <person name="Partha S.K."/>
            <person name="Ravulapalli R."/>
            <person name="Allingham J.S."/>
            <person name="Campbell R.L."/>
            <person name="Davies P.L."/>
        </authorList>
    </citation>
    <scope>X-RAY CRYSTALLOGRAPHY (2.45 ANGSTROMS) OF 642-821 IN COMPLEX WITH CALCIUM</scope>
    <scope>SUBUNIT</scope>
</reference>
<reference key="16">
    <citation type="journal article" date="1996" name="Brain">
        <title>Juvenile limb-girdle muscular dystrophy. Clinical, histopathological and genetic data from a small community living in the Reunion island.</title>
        <authorList>
            <person name="Fardeau M."/>
            <person name="Hillaire D."/>
            <person name="Mignard C."/>
            <person name="Feingold N."/>
            <person name="Feingold J."/>
            <person name="Mignard D."/>
            <person name="de Ubeda B."/>
            <person name="Collin H."/>
            <person name="Tome F.M.S."/>
            <person name="Richard I."/>
            <person name="Beckmann J.S."/>
        </authorList>
    </citation>
    <scope>VARIANTS LGMDR1 GLN-572 AND GLY-744</scope>
</reference>
<reference key="17">
    <citation type="journal article" date="1997" name="Am. J. Hum. Genet.">
        <title>Multiple independent molecular etiology for limb-girdle muscular dystrophy type 2A patients from various geographical origins.</title>
        <authorList>
            <person name="Richard I."/>
            <person name="Brenguier L."/>
            <person name="Dincer P."/>
            <person name="Roudaut C."/>
            <person name="Bady B."/>
            <person name="Burgunder J.-M."/>
            <person name="Chemaly R."/>
            <person name="Garcia C.A."/>
            <person name="Halaby G."/>
            <person name="Jackson C.E."/>
            <person name="Kurnit D.M."/>
            <person name="Lefranc G."/>
            <person name="Legum C."/>
            <person name="Loiselet J."/>
            <person name="Merlini L."/>
            <person name="Nivelon-Chevallier A."/>
            <person name="Ollagnon-Roman E."/>
            <person name="Restagno G."/>
            <person name="Topaloglu H."/>
            <person name="Beckmann J.S."/>
        </authorList>
    </citation>
    <scope>VARIANTS LGMDR1 PHE-86; 215-SER--GLY-221 DEL; PRO-215; LEU-319; GLN-334; TRP-440; TRP-490; ARG-496; TRP-567; TRP-572; LEU-606; VAL-702 AND GLN-748</scope>
</reference>
<reference key="18">
    <citation type="journal article" date="1997" name="Ann. Neurol.">
        <title>A biochemical, genetic, and clinical survey of autosomal recessive limb girdle muscular dystrophies in Turkey.</title>
        <authorList>
            <person name="Dincer P."/>
            <person name="Leturcq F."/>
            <person name="Richard I."/>
            <person name="Piccolo F."/>
            <person name="Yalnizoglu D."/>
            <person name="de Toma C."/>
            <person name="Akcoeren Z."/>
            <person name="Broux O."/>
            <person name="Deburgrave N."/>
            <person name="Brenguier L."/>
            <person name="Roudaut C."/>
            <person name="Urtizberea J.A."/>
            <person name="Jung D."/>
            <person name="Tan E."/>
            <person name="Jeanpierre M."/>
            <person name="Campbell K.P."/>
            <person name="Kaplan J.-C."/>
            <person name="Beckmann J.S."/>
            <person name="Topaloglu H."/>
        </authorList>
    </citation>
    <scope>VARIANTS LGMDR1 ASN-336; GLN-490; VAL-702 AND GLN-748</scope>
</reference>
<reference key="19">
    <citation type="journal article" date="1998" name="Brain">
        <title>Limb-girdle muscular dystrophy in Guipuzcoa (Basque Country, Spain).</title>
        <authorList>
            <person name="Urtasun M."/>
            <person name="Saenz A."/>
            <person name="Roudaut C."/>
            <person name="Poza J.J."/>
            <person name="Urtizberea J.A."/>
            <person name="Cobo A.-M."/>
            <person name="Richard I."/>
            <person name="Garcia Bragado F."/>
            <person name="Leturcq F."/>
            <person name="Kaplan J.-C."/>
            <person name="Marti Masso J.F."/>
            <person name="Beckmann J.S."/>
            <person name="Lopez de Munain A."/>
        </authorList>
    </citation>
    <scope>VARIANTS LGMDR1 ARG-222; GLU-486; TRP-489 AND GLN-748</scope>
</reference>
<reference key="20">
    <citation type="journal article" date="1998" name="Hum. Mutat. Suppl.">
        <title>A small in-frame deletion within the protease domain of muscle-specific calpain, p94 causes early-onset limb-girdle muscular dystrophy 2A.</title>
        <authorList>
            <person name="Haeffner K."/>
            <person name="Speer A."/>
            <person name="Huebner C."/>
            <person name="Voit T."/>
            <person name="Oexle K."/>
        </authorList>
    </citation>
    <scope>VARIANT LGMDR1 200-PHE--LEU-204 DEL</scope>
</reference>
<reference key="21">
    <citation type="journal article" date="1998" name="Muscle Nerve">
        <title>Pseudometabolic expression and phenotypic variability of calpain deficiency in two siblings.</title>
        <authorList>
            <person name="Penisson-Besnier I."/>
            <person name="Richard I."/>
            <person name="Dubas F."/>
            <person name="Beckmann J.S."/>
            <person name="Fardeau M."/>
        </authorList>
    </citation>
    <scope>VARIANT LGMDR1 GLY-744</scope>
</reference>
<reference key="22">
    <citation type="journal article" date="1998" name="Muscle Nerve">
        <title>Clinical, pathological, and genetic features of limb-girdle muscular dystrophy type 2A with new calpain 3 gene mutations in seven patients from three Japanese families.</title>
        <authorList>
            <person name="Kawai H."/>
            <person name="Akaike M."/>
            <person name="Kunishige M."/>
            <person name="Inui T."/>
            <person name="Adachi K."/>
            <person name="Kimura C."/>
            <person name="Kawajiri M."/>
            <person name="Nishida Y."/>
            <person name="Endo I."/>
            <person name="Kashiwagi S."/>
            <person name="Nishino H."/>
            <person name="Fujiwara T."/>
            <person name="Okuno S."/>
            <person name="Roudaut C."/>
            <person name="Richard I."/>
            <person name="Beckmann J.S."/>
            <person name="Miyoshi K."/>
            <person name="Matsumoto T."/>
        </authorList>
    </citation>
    <scope>VARIANT LGMDR1 CYS-360</scope>
</reference>
<reference key="23">
    <citation type="journal article" date="2017" name="Clin. Genet.">
        <title>Improved diagnostic yield of neuromuscular disorders applying clinical exome sequencing in patients arising from a consanguineous population.</title>
        <authorList>
            <person name="Fattahi Z."/>
            <person name="Kalhor Z."/>
            <person name="Fadaee M."/>
            <person name="Vazehan R."/>
            <person name="Parsimehr E."/>
            <person name="Abolhassani A."/>
            <person name="Beheshtian M."/>
            <person name="Zamani G."/>
            <person name="Nafissi S."/>
            <person name="Nilipour Y."/>
            <person name="Akbari M.R."/>
            <person name="Kahrizi K."/>
            <person name="Kariminejad A."/>
            <person name="Najmabadi H."/>
        </authorList>
    </citation>
    <scope>VARIANTS LGMDR1 266-ILE-ASP-267 DEL; TRP-572; VAL-702 AND GLN-748</scope>
</reference>
<reference key="24">
    <citation type="journal article" date="2016" name="Neuromuscul. Disord.">
        <title>Report of limb girdle muscular dystrophy type 2a in 6 Iranian patients, one with a novel deletion in CAPN3 gene.</title>
        <authorList>
            <person name="Fadaee M."/>
            <person name="Kariminejad A."/>
            <person name="Fattahi Z."/>
            <person name="Nafissi S."/>
            <person name="Godarzi H.R."/>
            <person name="Beheshtian M."/>
            <person name="Vazehan R."/>
            <person name="Akbari M.R."/>
            <person name="Kahrizi K."/>
            <person name="Najmabadi H."/>
        </authorList>
    </citation>
    <scope>VARIANTS LGMDR1 266-ILE-ASP-267 DEL AND GLN-748</scope>
</reference>
<reference key="25">
    <citation type="journal article" date="2016" name="Brain">
        <title>A heterozygous 21-bp deletion in CAPN3 causes dominantly inherited limb girdle muscular dystrophy.</title>
        <authorList>
            <person name="Vissing J."/>
            <person name="Barresi R."/>
            <person name="Witting N."/>
            <person name="Van Ghelue M."/>
            <person name="Gammelgaard L."/>
            <person name="Bindoff L.A."/>
            <person name="Straub V."/>
            <person name="Lochmueller H."/>
            <person name="Hudson J."/>
            <person name="Wahl C.M."/>
            <person name="Arnardottir S."/>
            <person name="Dahlbom K."/>
            <person name="Jonsrud C."/>
            <person name="Duno M."/>
        </authorList>
    </citation>
    <scope>VARIANT LGMDD4 215-SER--GLY-221 DEL</scope>
    <scope>INVOLVEMENT IN LGMDD4</scope>
</reference>
<reference key="26">
    <citation type="journal article" date="2018" name="Muscle Nerve">
        <title>Autosomal dominant calpainopathy due to heterozygous CAPN3 C.643_663del21.</title>
        <authorList>
            <person name="Martinez-Thompson J.M."/>
            <person name="Niu Z."/>
            <person name="Tracy J.A."/>
            <person name="Moore S.A."/>
            <person name="Swenson A."/>
            <person name="Wieben E.D."/>
            <person name="Milone M."/>
        </authorList>
    </citation>
    <scope>VARIANT LGMDD4 215-SER--GLY-221 DEL</scope>
    <scope>INVOLVEMENT IN LGMDD4</scope>
</reference>